<feature type="chain" id="PRO_0000292412" description="Lysine-specific demethylase 5B">
    <location>
        <begin position="1"/>
        <end position="1544"/>
    </location>
</feature>
<feature type="domain" description="JmjN" evidence="6">
    <location>
        <begin position="32"/>
        <end position="73"/>
    </location>
</feature>
<feature type="domain" description="ARID" evidence="5">
    <location>
        <begin position="97"/>
        <end position="187"/>
    </location>
</feature>
<feature type="domain" description="JmjC" evidence="7">
    <location>
        <begin position="453"/>
        <end position="619"/>
    </location>
</feature>
<feature type="zinc finger region" description="PHD-type 1" evidence="20 33">
    <location>
        <begin position="309"/>
        <end position="359"/>
    </location>
</feature>
<feature type="zinc finger region" description="C5HC2" evidence="22 23 24">
    <location>
        <begin position="692"/>
        <end position="744"/>
    </location>
</feature>
<feature type="zinc finger region" description="PHD-type 2" evidence="4">
    <location>
        <begin position="1176"/>
        <end position="1224"/>
    </location>
</feature>
<feature type="zinc finger region" description="PHD-type 3" evidence="32">
    <location>
        <begin position="1484"/>
        <end position="1538"/>
    </location>
</feature>
<feature type="region of interest" description="Disordered" evidence="8">
    <location>
        <begin position="201"/>
        <end position="230"/>
    </location>
</feature>
<feature type="region of interest" description="Disordered" evidence="8">
    <location>
        <begin position="1374"/>
        <end position="1400"/>
    </location>
</feature>
<feature type="compositionally biased region" description="Basic and acidic residues" evidence="8">
    <location>
        <begin position="202"/>
        <end position="214"/>
    </location>
</feature>
<feature type="compositionally biased region" description="Polar residues" evidence="8">
    <location>
        <begin position="1376"/>
        <end position="1387"/>
    </location>
</feature>
<feature type="compositionally biased region" description="Basic and acidic residues" evidence="8">
    <location>
        <begin position="1389"/>
        <end position="1400"/>
    </location>
</feature>
<feature type="binding site" evidence="2">
    <location>
        <position position="425"/>
    </location>
    <ligand>
        <name>2-oxoglutarate</name>
        <dbReference type="ChEBI" id="CHEBI:16810"/>
    </ligand>
</feature>
<feature type="binding site" evidence="29 30 31">
    <location>
        <position position="499"/>
    </location>
    <ligand>
        <name>Fe cation</name>
        <dbReference type="ChEBI" id="CHEBI:24875"/>
        <note>catalytic</note>
    </ligand>
</feature>
<feature type="binding site" evidence="29 30 31">
    <location>
        <position position="501"/>
    </location>
    <ligand>
        <name>Fe cation</name>
        <dbReference type="ChEBI" id="CHEBI:24875"/>
        <note>catalytic</note>
    </ligand>
</feature>
<feature type="binding site" evidence="2">
    <location>
        <position position="507"/>
    </location>
    <ligand>
        <name>2-oxoglutarate</name>
        <dbReference type="ChEBI" id="CHEBI:16810"/>
    </ligand>
</feature>
<feature type="binding site" evidence="2">
    <location>
        <position position="509"/>
    </location>
    <ligand>
        <name>2-oxoglutarate</name>
        <dbReference type="ChEBI" id="CHEBI:16810"/>
    </ligand>
</feature>
<feature type="binding site" evidence="2">
    <location>
        <position position="517"/>
    </location>
    <ligand>
        <name>2-oxoglutarate</name>
        <dbReference type="ChEBI" id="CHEBI:16810"/>
    </ligand>
</feature>
<feature type="binding site" evidence="29 30 31">
    <location>
        <position position="587"/>
    </location>
    <ligand>
        <name>Fe cation</name>
        <dbReference type="ChEBI" id="CHEBI:24875"/>
        <note>catalytic</note>
    </ligand>
</feature>
<feature type="modified residue" description="N6-acetyllysine" evidence="3">
    <location>
        <position position="832"/>
    </location>
</feature>
<feature type="modified residue" description="Phosphoserine" evidence="34">
    <location>
        <position position="986"/>
    </location>
</feature>
<feature type="modified residue" description="Phosphoserine" evidence="34">
    <location>
        <position position="1328"/>
    </location>
</feature>
<feature type="modified residue" description="Phosphoserine" evidence="34">
    <location>
        <position position="1456"/>
    </location>
</feature>
<feature type="cross-link" description="Glycyl lysine isopeptide (Lys-Gly) (interchain with G-Cter in SUMO2)" evidence="37">
    <location>
        <position position="148"/>
    </location>
</feature>
<feature type="cross-link" description="Glycyl lysine isopeptide (Lys-Gly) (interchain with G-Cter in SUMO2)" evidence="37">
    <location>
        <position position="204"/>
    </location>
</feature>
<feature type="cross-link" description="Glycyl lysine isopeptide (Lys-Gly) (interchain with G-Cter in SUMO2)" evidence="37">
    <location>
        <position position="209"/>
    </location>
</feature>
<feature type="cross-link" description="Glycyl lysine isopeptide (Lys-Gly) (interchain with G-Cter in SUMO2)" evidence="35 36 37">
    <location>
        <position position="242"/>
    </location>
</feature>
<feature type="cross-link" description="Glycyl lysine isopeptide (Lys-Gly) (interchain with G-Cter in SUMO2)" evidence="37">
    <location>
        <position position="274"/>
    </location>
</feature>
<feature type="cross-link" description="Glycyl lysine isopeptide (Lys-Gly) (interchain with G-Cter in SUMO2)" evidence="35 36 37">
    <location>
        <position position="278"/>
    </location>
</feature>
<feature type="cross-link" description="Glycyl lysine isopeptide (Lys-Gly) (interchain with G-Cter in SUMO2)" evidence="36 37">
    <location>
        <position position="769"/>
    </location>
</feature>
<feature type="cross-link" description="Glycyl lysine isopeptide (Lys-Gly) (interchain with G-Cter in SUMO2)" evidence="37">
    <location>
        <position position="1450"/>
    </location>
</feature>
<feature type="splice variant" id="VSP_026408" description="In isoform 2." evidence="27">
    <original>E</original>
    <variation>ERQSLAVLPRLECSGAILAHCNLRLLDSSNSSASASQ</variation>
    <location>
        <position position="237"/>
    </location>
</feature>
<feature type="sequence variant" id="VAR_081276" description="In MRT65." evidence="25">
    <location>
        <begin position="299"/>
        <end position="1544"/>
    </location>
</feature>
<feature type="sequence variant" id="VAR_081277" description="In MRT65." evidence="25">
    <location>
        <begin position="1370"/>
        <end position="1544"/>
    </location>
</feature>
<feature type="mutagenesis site" description="Slightly decreases interaction with histone H3. Decreases by 21% demethylase activity and repression of tumor suppressor genes expression." evidence="20">
    <original>D</original>
    <variation>A</variation>
    <location>
        <position position="308"/>
    </location>
</feature>
<feature type="mutagenesis site" description="No effect on interaction with histone H3." evidence="20">
    <original>L</original>
    <variation>A</variation>
    <location>
        <position position="309"/>
    </location>
</feature>
<feature type="mutagenesis site" description="Slightly decreases interaction with histone H3." evidence="20">
    <original>Y</original>
    <variation>A</variation>
    <location>
        <position position="310"/>
    </location>
</feature>
<feature type="mutagenesis site" description="No effect on interaction with histone H3." evidence="20">
    <original>Y</original>
    <variation>F</variation>
    <location>
        <position position="310"/>
    </location>
</feature>
<feature type="mutagenesis site" description="No effect on interaction with histone H3." evidence="20">
    <original>V</original>
    <variation>A</variation>
    <location>
        <position position="311"/>
    </location>
</feature>
<feature type="mutagenesis site" description="Decreases interaction with histone H3." evidence="20">
    <original>E</original>
    <variation>A</variation>
    <location>
        <position position="321"/>
    </location>
</feature>
<feature type="mutagenesis site" description="No effect on interaction with histone H3." evidence="20">
    <original>D</original>
    <variation>A</variation>
    <location>
        <position position="322"/>
    </location>
</feature>
<feature type="mutagenesis site" description="No effect on interaction with histone H3." evidence="20">
    <original>L</original>
    <variation>A</variation>
    <location>
        <position position="324"/>
    </location>
</feature>
<feature type="mutagenesis site" description="Abolishes interaction with histone H3. Decreases by 44% demethylase activity and repression of tumor suppressor genes expression; when associated with A-328." evidence="20">
    <original>L</original>
    <variation>A</variation>
    <location>
        <position position="325"/>
    </location>
</feature>
<feature type="mutagenesis site" description="No effect on interaction with histone H3." evidence="20">
    <original>L</original>
    <variation>A</variation>
    <location>
        <position position="326"/>
    </location>
</feature>
<feature type="mutagenesis site" description="Almost abolishes interaction with histone H3. Decreases by 44% demethylase activity and repression of tumor suppressor genes expression; when associated with A-325." evidence="20">
    <original>D</original>
    <variation>A</variation>
    <location>
        <position position="328"/>
    </location>
</feature>
<feature type="mutagenesis site" description="No effect on interaction with histone H3." evidence="20">
    <original>D</original>
    <variation>A</variation>
    <location>
        <position position="332"/>
    </location>
</feature>
<feature type="mutagenesis site" description="No effect on interaction with histone H3." evidence="20">
    <original>S</original>
    <variation>A</variation>
    <location>
        <position position="333"/>
    </location>
</feature>
<feature type="mutagenesis site" description="No effect on interaction with histone H3." evidence="20">
    <original>Y</original>
    <variation>A</variation>
    <location>
        <position position="334"/>
    </location>
</feature>
<feature type="mutagenesis site" description="Slightly impairs transcription repression ability." evidence="19">
    <original>H</original>
    <variation>A</variation>
    <location>
        <position position="335"/>
    </location>
</feature>
<feature type="mutagenesis site" description="No effect on interaction with histone H3." evidence="20">
    <original>D</original>
    <variation>A</variation>
    <location>
        <position position="345"/>
    </location>
</feature>
<feature type="mutagenesis site" description="Abolishes interaction with histone H3. Decreases by 28% demethylase activity and repression of tumor suppressor genes expression." evidence="20">
    <original>W</original>
    <variation>A</variation>
    <location>
        <position position="351"/>
    </location>
</feature>
<feature type="mutagenesis site" description="Abolishes lysine-specific histone demethylase activity." evidence="24">
    <original>HIE</original>
    <variation>AIA</variation>
    <location>
        <begin position="499"/>
        <end position="501"/>
    </location>
</feature>
<feature type="mutagenesis site" description="Abolishes lysine-specific histone demethylase activity." evidence="18">
    <original>H</original>
    <variation>Y</variation>
    <location>
        <position position="499"/>
    </location>
</feature>
<feature type="mutagenesis site" description="Impairs transcription repression ability and interaction with HDAC4." evidence="19">
    <original>H</original>
    <variation>A</variation>
    <location>
        <position position="1200"/>
    </location>
</feature>
<feature type="sequence conflict" description="In Ref. 3; CAB63108." evidence="28" ref="3">
    <original>V</original>
    <variation>G</variation>
    <location>
        <position position="78"/>
    </location>
</feature>
<feature type="sequence conflict" description="In Ref. 2; AAD16061." evidence="28" ref="2">
    <original>AYHSG</original>
    <variation>VPQW</variation>
    <location>
        <begin position="585"/>
        <end position="589"/>
    </location>
</feature>
<feature type="sequence conflict" description="In Ref. 2; AAD16061." evidence="28" ref="2">
    <original>C</original>
    <variation>W</variation>
    <location>
        <position position="708"/>
    </location>
</feature>
<feature type="sequence conflict" description="In Ref. 2; AAD16061." evidence="28" ref="2">
    <original>A</original>
    <variation>P</variation>
    <location>
        <position position="759"/>
    </location>
</feature>
<feature type="sequence conflict" description="In Ref. 2; AAD16061 and 3; CAB63108." evidence="28" ref="2 3">
    <original>N</original>
    <variation>T</variation>
    <location>
        <position position="771"/>
    </location>
</feature>
<feature type="sequence conflict" description="In Ref. 2; AAD16061." evidence="28" ref="2">
    <original>Q</original>
    <variation>R</variation>
    <location>
        <position position="1182"/>
    </location>
</feature>
<feature type="sequence conflict" description="In Ref. 2; AAD16061." evidence="28" ref="2">
    <original>A</original>
    <variation>P</variation>
    <location>
        <position position="1293"/>
    </location>
</feature>
<feature type="sequence conflict" description="In Ref. 2; AAD16061." evidence="28" ref="2">
    <original>P</original>
    <variation>L</variation>
    <location>
        <position position="1307"/>
    </location>
</feature>
<feature type="sequence conflict" description="In Ref. 2; AAD16061." evidence="28" ref="2">
    <original>S</original>
    <variation>ST</variation>
    <location>
        <position position="1331"/>
    </location>
</feature>
<feature type="helix" evidence="44">
    <location>
        <begin position="39"/>
        <end position="42"/>
    </location>
</feature>
<feature type="helix" evidence="44">
    <location>
        <begin position="45"/>
        <end position="56"/>
    </location>
</feature>
<feature type="turn" evidence="44">
    <location>
        <begin position="57"/>
        <end position="59"/>
    </location>
</feature>
<feature type="strand" evidence="44">
    <location>
        <begin position="60"/>
        <end position="64"/>
    </location>
</feature>
<feature type="turn" evidence="44">
    <location>
        <begin position="78"/>
        <end position="80"/>
    </location>
</feature>
<feature type="strand" evidence="44">
    <location>
        <begin position="86"/>
        <end position="89"/>
    </location>
</feature>
<feature type="strand" evidence="47">
    <location>
        <begin position="96"/>
        <end position="98"/>
    </location>
</feature>
<feature type="strand" evidence="39">
    <location>
        <begin position="308"/>
        <end position="310"/>
    </location>
</feature>
<feature type="strand" evidence="40">
    <location>
        <begin position="313"/>
        <end position="315"/>
    </location>
</feature>
<feature type="helix" evidence="39">
    <location>
        <begin position="319"/>
        <end position="323"/>
    </location>
</feature>
<feature type="strand" evidence="39">
    <location>
        <begin position="324"/>
        <end position="326"/>
    </location>
</feature>
<feature type="strand" evidence="39">
    <location>
        <begin position="328"/>
        <end position="331"/>
    </location>
</feature>
<feature type="strand" evidence="39">
    <location>
        <begin position="333"/>
        <end position="335"/>
    </location>
</feature>
<feature type="turn" evidence="39">
    <location>
        <begin position="336"/>
        <end position="339"/>
    </location>
</feature>
<feature type="turn" evidence="48">
    <location>
        <begin position="358"/>
        <end position="360"/>
    </location>
</feature>
<feature type="strand" evidence="48">
    <location>
        <begin position="363"/>
        <end position="366"/>
    </location>
</feature>
<feature type="helix" evidence="44">
    <location>
        <begin position="379"/>
        <end position="394"/>
    </location>
</feature>
<feature type="helix" evidence="44">
    <location>
        <begin position="398"/>
        <end position="400"/>
    </location>
</feature>
<feature type="helix" evidence="44">
    <location>
        <begin position="403"/>
        <end position="415"/>
    </location>
</feature>
<feature type="strand" evidence="44">
    <location>
        <begin position="422"/>
        <end position="429"/>
    </location>
</feature>
<feature type="strand" evidence="43">
    <location>
        <begin position="432"/>
        <end position="434"/>
    </location>
</feature>
<feature type="strand" evidence="41">
    <location>
        <begin position="443"/>
        <end position="445"/>
    </location>
</feature>
<feature type="helix" evidence="44">
    <location>
        <begin position="449"/>
        <end position="454"/>
    </location>
</feature>
<feature type="strand" evidence="45">
    <location>
        <begin position="458"/>
        <end position="460"/>
    </location>
</feature>
<feature type="turn" evidence="44">
    <location>
        <begin position="461"/>
        <end position="466"/>
    </location>
</feature>
<feature type="strand" evidence="42">
    <location>
        <begin position="467"/>
        <end position="469"/>
    </location>
</feature>
<feature type="helix" evidence="44">
    <location>
        <begin position="472"/>
        <end position="474"/>
    </location>
</feature>
<feature type="helix" evidence="44">
    <location>
        <begin position="480"/>
        <end position="483"/>
    </location>
</feature>
<feature type="strand" evidence="44">
    <location>
        <begin position="486"/>
        <end position="490"/>
    </location>
</feature>
<feature type="strand" evidence="44">
    <location>
        <begin position="495"/>
        <end position="499"/>
    </location>
</feature>
<feature type="helix" evidence="44">
    <location>
        <begin position="502"/>
        <end position="504"/>
    </location>
</feature>
<feature type="strand" evidence="44">
    <location>
        <begin position="506"/>
        <end position="515"/>
    </location>
</feature>
<feature type="strand" evidence="44">
    <location>
        <begin position="517"/>
        <end position="521"/>
    </location>
</feature>
<feature type="helix" evidence="44">
    <location>
        <begin position="524"/>
        <end position="526"/>
    </location>
</feature>
<feature type="helix" evidence="44">
    <location>
        <begin position="527"/>
        <end position="537"/>
    </location>
</feature>
<feature type="helix" evidence="44">
    <location>
        <begin position="539"/>
        <end position="542"/>
    </location>
</feature>
<feature type="helix" evidence="44">
    <location>
        <begin position="548"/>
        <end position="550"/>
    </location>
</feature>
<feature type="strand" evidence="46">
    <location>
        <begin position="552"/>
        <end position="554"/>
    </location>
</feature>
<feature type="helix" evidence="44">
    <location>
        <begin position="558"/>
        <end position="563"/>
    </location>
</feature>
<feature type="strand" evidence="44">
    <location>
        <begin position="569"/>
        <end position="573"/>
    </location>
</feature>
<feature type="strand" evidence="44">
    <location>
        <begin position="578"/>
        <end position="581"/>
    </location>
</feature>
<feature type="strand" evidence="44">
    <location>
        <begin position="587"/>
        <end position="602"/>
    </location>
</feature>
<feature type="helix" evidence="44">
    <location>
        <begin position="605"/>
        <end position="607"/>
    </location>
</feature>
<feature type="helix" evidence="44">
    <location>
        <begin position="608"/>
        <end position="621"/>
    </location>
</feature>
<feature type="helix" evidence="44">
    <location>
        <begin position="629"/>
        <end position="637"/>
    </location>
</feature>
<feature type="helix" evidence="44">
    <location>
        <begin position="638"/>
        <end position="642"/>
    </location>
</feature>
<feature type="helix" evidence="44">
    <location>
        <begin position="645"/>
        <end position="671"/>
    </location>
</feature>
<feature type="strand" evidence="44">
    <location>
        <begin position="676"/>
        <end position="679"/>
    </location>
</feature>
<feature type="helix" evidence="44">
    <location>
        <begin position="682"/>
        <end position="684"/>
    </location>
</feature>
<feature type="helix" evidence="44">
    <location>
        <begin position="687"/>
        <end position="689"/>
    </location>
</feature>
<feature type="strand" evidence="44">
    <location>
        <begin position="690"/>
        <end position="692"/>
    </location>
</feature>
<feature type="turn" evidence="44">
    <location>
        <begin position="693"/>
        <end position="695"/>
    </location>
</feature>
<feature type="strand" evidence="44">
    <location>
        <begin position="701"/>
        <end position="706"/>
    </location>
</feature>
<feature type="helix" evidence="44">
    <location>
        <begin position="719"/>
        <end position="721"/>
    </location>
</feature>
<feature type="helix" evidence="44">
    <location>
        <begin position="727"/>
        <end position="729"/>
    </location>
</feature>
<feature type="strand" evidence="44">
    <location>
        <begin position="730"/>
        <end position="735"/>
    </location>
</feature>
<feature type="helix" evidence="44">
    <location>
        <begin position="738"/>
        <end position="752"/>
    </location>
</feature>
<feature type="strand" evidence="38">
    <location>
        <begin position="1495"/>
        <end position="1500"/>
    </location>
</feature>
<feature type="strand" evidence="38">
    <location>
        <begin position="1502"/>
        <end position="1505"/>
    </location>
</feature>
<feature type="turn" evidence="38">
    <location>
        <begin position="1506"/>
        <end position="1509"/>
    </location>
</feature>
<feature type="strand" evidence="38">
    <location>
        <begin position="1511"/>
        <end position="1514"/>
    </location>
</feature>
<feature type="helix" evidence="38">
    <location>
        <begin position="1515"/>
        <end position="1518"/>
    </location>
</feature>
<feature type="helix" evidence="38">
    <location>
        <begin position="1522"/>
        <end position="1526"/>
    </location>
</feature>
<feature type="helix" evidence="38">
    <location>
        <begin position="1533"/>
        <end position="1537"/>
    </location>
</feature>
<protein>
    <recommendedName>
        <fullName>Lysine-specific demethylase 5B</fullName>
        <ecNumber evidence="3">1.14.11.67</ecNumber>
    </recommendedName>
    <alternativeName>
        <fullName>Cancer/testis antigen 31</fullName>
        <shortName>CT31</shortName>
    </alternativeName>
    <alternativeName>
        <fullName>Histone demethylase JARID1B</fullName>
    </alternativeName>
    <alternativeName>
        <fullName>Jumonji/ARID domain-containing protein 1B</fullName>
    </alternativeName>
    <alternativeName>
        <fullName>PLU-1</fullName>
    </alternativeName>
    <alternativeName>
        <fullName>Retinoblastoma-binding protein 2 homolog 1</fullName>
        <shortName>RBP2-H1</shortName>
    </alternativeName>
    <alternativeName>
        <fullName evidence="28">[histone H3]-trimethyl-L-lysine(4) demethylase 5B</fullName>
    </alternativeName>
</protein>
<organism>
    <name type="scientific">Homo sapiens</name>
    <name type="common">Human</name>
    <dbReference type="NCBI Taxonomy" id="9606"/>
    <lineage>
        <taxon>Eukaryota</taxon>
        <taxon>Metazoa</taxon>
        <taxon>Chordata</taxon>
        <taxon>Craniata</taxon>
        <taxon>Vertebrata</taxon>
        <taxon>Euteleostomi</taxon>
        <taxon>Mammalia</taxon>
        <taxon>Eutheria</taxon>
        <taxon>Euarchontoglires</taxon>
        <taxon>Primates</taxon>
        <taxon>Haplorrhini</taxon>
        <taxon>Catarrhini</taxon>
        <taxon>Hominidae</taxon>
        <taxon>Homo</taxon>
    </lineage>
</organism>
<dbReference type="EC" id="1.14.11.67" evidence="3"/>
<dbReference type="EMBL" id="AJ132440">
    <property type="protein sequence ID" value="CAB43532.1"/>
    <property type="molecule type" value="mRNA"/>
</dbReference>
<dbReference type="EMBL" id="AF087481">
    <property type="protein sequence ID" value="AAD16061.1"/>
    <property type="molecule type" value="mRNA"/>
</dbReference>
<dbReference type="EMBL" id="AJ243706">
    <property type="protein sequence ID" value="CAB63108.1"/>
    <property type="status" value="ALT_INIT"/>
    <property type="molecule type" value="mRNA"/>
</dbReference>
<dbReference type="EMBL" id="AC098934">
    <property type="status" value="NOT_ANNOTATED_CDS"/>
    <property type="molecule type" value="Genomic_DNA"/>
</dbReference>
<dbReference type="EMBL" id="AC104463">
    <property type="status" value="NOT_ANNOTATED_CDS"/>
    <property type="molecule type" value="Genomic_DNA"/>
</dbReference>
<dbReference type="CCDS" id="CCDS30974.1">
    <molecule id="Q9UGL1-1"/>
</dbReference>
<dbReference type="CCDS" id="CCDS81417.1">
    <molecule id="Q9UGL1-2"/>
</dbReference>
<dbReference type="RefSeq" id="NP_001300971.1">
    <molecule id="Q9UGL1-2"/>
    <property type="nucleotide sequence ID" value="NM_001314042.2"/>
</dbReference>
<dbReference type="RefSeq" id="NP_006609.3">
    <molecule id="Q9UGL1-1"/>
    <property type="nucleotide sequence ID" value="NM_006618.4"/>
</dbReference>
<dbReference type="PDB" id="2MA5">
    <property type="method" value="NMR"/>
    <property type="chains" value="A=1487-1544"/>
</dbReference>
<dbReference type="PDB" id="2MNY">
    <property type="method" value="NMR"/>
    <property type="chains" value="A=306-360"/>
</dbReference>
<dbReference type="PDB" id="2MNZ">
    <property type="method" value="NMR"/>
    <property type="chains" value="A=306-360"/>
</dbReference>
<dbReference type="PDB" id="5A1F">
    <property type="method" value="X-ray"/>
    <property type="resolution" value="2.10 A"/>
    <property type="chains" value="A=26-770"/>
</dbReference>
<dbReference type="PDB" id="5A3N">
    <property type="method" value="X-ray"/>
    <property type="resolution" value="2.00 A"/>
    <property type="chains" value="A=26-101, A=374-772"/>
</dbReference>
<dbReference type="PDB" id="5A3P">
    <property type="method" value="X-ray"/>
    <property type="resolution" value="2.01 A"/>
    <property type="chains" value="A=26-101, A=374-770"/>
</dbReference>
<dbReference type="PDB" id="5A3T">
    <property type="method" value="X-ray"/>
    <property type="resolution" value="1.90 A"/>
    <property type="chains" value="A=26-101, A=374-772"/>
</dbReference>
<dbReference type="PDB" id="5A3W">
    <property type="method" value="X-ray"/>
    <property type="resolution" value="2.00 A"/>
    <property type="chains" value="A=26-101, A=374-772"/>
</dbReference>
<dbReference type="PDB" id="5FPL">
    <property type="method" value="X-ray"/>
    <property type="resolution" value="2.35 A"/>
    <property type="chains" value="A=26-101, A=374-772"/>
</dbReference>
<dbReference type="PDB" id="5FPU">
    <property type="method" value="X-ray"/>
    <property type="resolution" value="2.24 A"/>
    <property type="chains" value="A=26-101, A=374-772"/>
</dbReference>
<dbReference type="PDB" id="5FUN">
    <property type="method" value="X-ray"/>
    <property type="resolution" value="2.30 A"/>
    <property type="chains" value="A=26-101, A=374-772"/>
</dbReference>
<dbReference type="PDB" id="5FUP">
    <property type="method" value="X-ray"/>
    <property type="resolution" value="2.15 A"/>
    <property type="chains" value="A=26-101, A=374-770"/>
</dbReference>
<dbReference type="PDB" id="5FV3">
    <property type="method" value="X-ray"/>
    <property type="resolution" value="2.37 A"/>
    <property type="chains" value="A=26-101, A=374-770"/>
</dbReference>
<dbReference type="PDB" id="5FY4">
    <property type="method" value="X-ray"/>
    <property type="resolution" value="2.10 A"/>
    <property type="chains" value="A=26-101, A=374-770"/>
</dbReference>
<dbReference type="PDB" id="5FY5">
    <property type="method" value="X-ray"/>
    <property type="resolution" value="2.47 A"/>
    <property type="chains" value="A=26-101, A=374-770"/>
</dbReference>
<dbReference type="PDB" id="5FY9">
    <property type="method" value="X-ray"/>
    <property type="resolution" value="2.03 A"/>
    <property type="chains" value="A=26-101, A=374-770"/>
</dbReference>
<dbReference type="PDB" id="5FYB">
    <property type="method" value="X-ray"/>
    <property type="resolution" value="1.87 A"/>
    <property type="chains" value="A=26-101, A=374-770"/>
</dbReference>
<dbReference type="PDB" id="5FYS">
    <property type="method" value="X-ray"/>
    <property type="resolution" value="1.89 A"/>
    <property type="chains" value="A=26-101, A=374-770"/>
</dbReference>
<dbReference type="PDB" id="5FYT">
    <property type="method" value="X-ray"/>
    <property type="resolution" value="1.87 A"/>
    <property type="chains" value="A=26-101, A=374-770"/>
</dbReference>
<dbReference type="PDB" id="5FYU">
    <property type="method" value="X-ray"/>
    <property type="resolution" value="2.06 A"/>
    <property type="chains" value="A=26-101, A=374-770"/>
</dbReference>
<dbReference type="PDB" id="5FYV">
    <property type="method" value="X-ray"/>
    <property type="resolution" value="1.87 A"/>
    <property type="chains" value="A=26-101, A=374-770"/>
</dbReference>
<dbReference type="PDB" id="5FYY">
    <property type="method" value="X-ray"/>
    <property type="resolution" value="2.18 A"/>
    <property type="chains" value="A=26-101, A=374-770"/>
</dbReference>
<dbReference type="PDB" id="5FYZ">
    <property type="method" value="X-ray"/>
    <property type="resolution" value="1.75 A"/>
    <property type="chains" value="A=26-101, A=374-770"/>
</dbReference>
<dbReference type="PDB" id="5FZ0">
    <property type="method" value="X-ray"/>
    <property type="resolution" value="2.42 A"/>
    <property type="chains" value="A=26-101, A=374-770"/>
</dbReference>
<dbReference type="PDB" id="5FZ1">
    <property type="method" value="X-ray"/>
    <property type="resolution" value="2.39 A"/>
    <property type="chains" value="A=26-101, A=374-770"/>
</dbReference>
<dbReference type="PDB" id="5FZ3">
    <property type="method" value="X-ray"/>
    <property type="resolution" value="2.50 A"/>
    <property type="chains" value="A=26-101, A=374-770"/>
</dbReference>
<dbReference type="PDB" id="5FZ4">
    <property type="method" value="X-ray"/>
    <property type="resolution" value="2.07 A"/>
    <property type="chains" value="A=26-101, A=374-770"/>
</dbReference>
<dbReference type="PDB" id="5FZ6">
    <property type="method" value="X-ray"/>
    <property type="resolution" value="2.33 A"/>
    <property type="chains" value="A=26-101, A=374-770"/>
</dbReference>
<dbReference type="PDB" id="5FZ7">
    <property type="method" value="X-ray"/>
    <property type="resolution" value="2.30 A"/>
    <property type="chains" value="A=26-101, A=374-770"/>
</dbReference>
<dbReference type="PDB" id="5FZ8">
    <property type="method" value="X-ray"/>
    <property type="resolution" value="1.86 A"/>
    <property type="chains" value="A=26-101, A=374-770"/>
</dbReference>
<dbReference type="PDB" id="5FZ9">
    <property type="method" value="X-ray"/>
    <property type="resolution" value="2.06 A"/>
    <property type="chains" value="A=26-101, A=374-770"/>
</dbReference>
<dbReference type="PDB" id="5FZA">
    <property type="method" value="X-ray"/>
    <property type="resolution" value="2.10 A"/>
    <property type="chains" value="A=26-101, A=374-770"/>
</dbReference>
<dbReference type="PDB" id="5FZB">
    <property type="method" value="X-ray"/>
    <property type="resolution" value="2.18 A"/>
    <property type="chains" value="A=26-101, A=374-770"/>
</dbReference>
<dbReference type="PDB" id="5FZC">
    <property type="method" value="X-ray"/>
    <property type="resolution" value="2.05 A"/>
    <property type="chains" value="A=26-101, A=374-770"/>
</dbReference>
<dbReference type="PDB" id="5FZD">
    <property type="method" value="X-ray"/>
    <property type="resolution" value="2.05 A"/>
    <property type="chains" value="A=26-101, A=374-770"/>
</dbReference>
<dbReference type="PDB" id="5FZE">
    <property type="method" value="X-ray"/>
    <property type="resolution" value="2.02 A"/>
    <property type="chains" value="A=26-101, A=374-770"/>
</dbReference>
<dbReference type="PDB" id="5FZF">
    <property type="method" value="X-ray"/>
    <property type="resolution" value="1.97 A"/>
    <property type="chains" value="A=26-101, A=374-770"/>
</dbReference>
<dbReference type="PDB" id="5FZG">
    <property type="method" value="X-ray"/>
    <property type="resolution" value="1.96 A"/>
    <property type="chains" value="A=26-101, A=374-770"/>
</dbReference>
<dbReference type="PDB" id="5FZH">
    <property type="method" value="X-ray"/>
    <property type="resolution" value="2.09 A"/>
    <property type="chains" value="A=26-101, A=374-442, A=444-770"/>
</dbReference>
<dbReference type="PDB" id="5FZI">
    <property type="method" value="X-ray"/>
    <property type="resolution" value="1.95 A"/>
    <property type="chains" value="A=26-101, A=374-770"/>
</dbReference>
<dbReference type="PDB" id="5FZK">
    <property type="method" value="X-ray"/>
    <property type="resolution" value="2.05 A"/>
    <property type="chains" value="A=26-101, A=374-770"/>
</dbReference>
<dbReference type="PDB" id="5FZL">
    <property type="method" value="X-ray"/>
    <property type="resolution" value="2.55 A"/>
    <property type="chains" value="A=26-101, A=374-770"/>
</dbReference>
<dbReference type="PDB" id="5FZM">
    <property type="method" value="X-ray"/>
    <property type="resolution" value="2.49 A"/>
    <property type="chains" value="A=26-101, A=376-770"/>
</dbReference>
<dbReference type="PDB" id="5LW9">
    <property type="method" value="X-ray"/>
    <property type="resolution" value="2.30 A"/>
    <property type="chains" value="A=26-99, A=374-772"/>
</dbReference>
<dbReference type="PDB" id="5LWB">
    <property type="method" value="X-ray"/>
    <property type="resolution" value="2.39 A"/>
    <property type="chains" value="A=26-101, A=374-772"/>
</dbReference>
<dbReference type="PDB" id="6EIN">
    <property type="method" value="X-ray"/>
    <property type="resolution" value="2.11 A"/>
    <property type="chains" value="A=26-101, A=374-772"/>
</dbReference>
<dbReference type="PDB" id="6EIU">
    <property type="method" value="X-ray"/>
    <property type="resolution" value="1.88 A"/>
    <property type="chains" value="A=26-100, A=374-754"/>
</dbReference>
<dbReference type="PDB" id="6EIY">
    <property type="method" value="X-ray"/>
    <property type="resolution" value="2.15 A"/>
    <property type="chains" value="A=26-100, A=374-754"/>
</dbReference>
<dbReference type="PDB" id="6EJ0">
    <property type="method" value="X-ray"/>
    <property type="resolution" value="2.06 A"/>
    <property type="chains" value="A=26-98, A=375-754"/>
</dbReference>
<dbReference type="PDB" id="6EJ1">
    <property type="method" value="X-ray"/>
    <property type="resolution" value="2.07 A"/>
    <property type="chains" value="A=26-98, A=375-754"/>
</dbReference>
<dbReference type="PDB" id="6EK6">
    <property type="method" value="X-ray"/>
    <property type="resolution" value="2.05 A"/>
    <property type="chains" value="A=347-754"/>
</dbReference>
<dbReference type="PDB" id="6H4Z">
    <property type="method" value="X-ray"/>
    <property type="resolution" value="2.30 A"/>
    <property type="chains" value="A=26-101, A=374-772"/>
</dbReference>
<dbReference type="PDB" id="6H50">
    <property type="method" value="X-ray"/>
    <property type="resolution" value="2.19 A"/>
    <property type="chains" value="A=26-101, A=374-772"/>
</dbReference>
<dbReference type="PDB" id="6H51">
    <property type="method" value="X-ray"/>
    <property type="resolution" value="2.21 A"/>
    <property type="chains" value="A=26-101, A=374-772"/>
</dbReference>
<dbReference type="PDB" id="6H52">
    <property type="method" value="X-ray"/>
    <property type="resolution" value="2.14 A"/>
    <property type="chains" value="A=26-101, A=374-772"/>
</dbReference>
<dbReference type="PDB" id="6RBI">
    <property type="method" value="X-ray"/>
    <property type="resolution" value="2.21 A"/>
    <property type="chains" value="A=26-101, A=374-772"/>
</dbReference>
<dbReference type="PDBsum" id="2MA5"/>
<dbReference type="PDBsum" id="2MNY"/>
<dbReference type="PDBsum" id="2MNZ"/>
<dbReference type="PDBsum" id="5A1F"/>
<dbReference type="PDBsum" id="5A3N"/>
<dbReference type="PDBsum" id="5A3P"/>
<dbReference type="PDBsum" id="5A3T"/>
<dbReference type="PDBsum" id="5A3W"/>
<dbReference type="PDBsum" id="5FPL"/>
<dbReference type="PDBsum" id="5FPU"/>
<dbReference type="PDBsum" id="5FUN"/>
<dbReference type="PDBsum" id="5FUP"/>
<dbReference type="PDBsum" id="5FV3"/>
<dbReference type="PDBsum" id="5FY4"/>
<dbReference type="PDBsum" id="5FY5"/>
<dbReference type="PDBsum" id="5FY9"/>
<dbReference type="PDBsum" id="5FYB"/>
<dbReference type="PDBsum" id="5FYS"/>
<dbReference type="PDBsum" id="5FYT"/>
<dbReference type="PDBsum" id="5FYU"/>
<dbReference type="PDBsum" id="5FYV"/>
<dbReference type="PDBsum" id="5FYY"/>
<dbReference type="PDBsum" id="5FYZ"/>
<dbReference type="PDBsum" id="5FZ0"/>
<dbReference type="PDBsum" id="5FZ1"/>
<dbReference type="PDBsum" id="5FZ3"/>
<dbReference type="PDBsum" id="5FZ4"/>
<dbReference type="PDBsum" id="5FZ6"/>
<dbReference type="PDBsum" id="5FZ7"/>
<dbReference type="PDBsum" id="5FZ8"/>
<dbReference type="PDBsum" id="5FZ9"/>
<dbReference type="PDBsum" id="5FZA"/>
<dbReference type="PDBsum" id="5FZB"/>
<dbReference type="PDBsum" id="5FZC"/>
<dbReference type="PDBsum" id="5FZD"/>
<dbReference type="PDBsum" id="5FZE"/>
<dbReference type="PDBsum" id="5FZF"/>
<dbReference type="PDBsum" id="5FZG"/>
<dbReference type="PDBsum" id="5FZH"/>
<dbReference type="PDBsum" id="5FZI"/>
<dbReference type="PDBsum" id="5FZK"/>
<dbReference type="PDBsum" id="5FZL"/>
<dbReference type="PDBsum" id="5FZM"/>
<dbReference type="PDBsum" id="5LW9"/>
<dbReference type="PDBsum" id="5LWB"/>
<dbReference type="PDBsum" id="6EIN"/>
<dbReference type="PDBsum" id="6EIU"/>
<dbReference type="PDBsum" id="6EIY"/>
<dbReference type="PDBsum" id="6EJ0"/>
<dbReference type="PDBsum" id="6EJ1"/>
<dbReference type="PDBsum" id="6EK6"/>
<dbReference type="PDBsum" id="6H4Z"/>
<dbReference type="PDBsum" id="6H50"/>
<dbReference type="PDBsum" id="6H51"/>
<dbReference type="PDBsum" id="6H52"/>
<dbReference type="PDBsum" id="6RBI"/>
<dbReference type="BMRB" id="Q9UGL1"/>
<dbReference type="SASBDB" id="Q9UGL1"/>
<dbReference type="SMR" id="Q9UGL1"/>
<dbReference type="BioGRID" id="115984">
    <property type="interactions" value="95"/>
</dbReference>
<dbReference type="CORUM" id="Q9UGL1"/>
<dbReference type="DIP" id="DIP-53652N"/>
<dbReference type="FunCoup" id="Q9UGL1">
    <property type="interactions" value="4866"/>
</dbReference>
<dbReference type="IntAct" id="Q9UGL1">
    <property type="interactions" value="24"/>
</dbReference>
<dbReference type="MINT" id="Q9UGL1"/>
<dbReference type="STRING" id="9606.ENSP00000356233"/>
<dbReference type="BindingDB" id="Q9UGL1"/>
<dbReference type="ChEMBL" id="CHEMBL3774295"/>
<dbReference type="GuidetoPHARMACOLOGY" id="2681"/>
<dbReference type="GlyGen" id="Q9UGL1">
    <property type="glycosylation" value="2 sites, 1 O-linked glycan (2 sites)"/>
</dbReference>
<dbReference type="iPTMnet" id="Q9UGL1"/>
<dbReference type="PhosphoSitePlus" id="Q9UGL1"/>
<dbReference type="SwissPalm" id="Q9UGL1"/>
<dbReference type="BioMuta" id="KDM5B"/>
<dbReference type="DMDM" id="296439317"/>
<dbReference type="jPOST" id="Q9UGL1"/>
<dbReference type="MassIVE" id="Q9UGL1"/>
<dbReference type="PaxDb" id="9606-ENSP00000356234"/>
<dbReference type="PeptideAtlas" id="Q9UGL1"/>
<dbReference type="ProteomicsDB" id="84231">
    <molecule id="Q9UGL1-1"/>
</dbReference>
<dbReference type="ProteomicsDB" id="84232">
    <molecule id="Q9UGL1-2"/>
</dbReference>
<dbReference type="Pumba" id="Q9UGL1"/>
<dbReference type="ABCD" id="Q9UGL1">
    <property type="antibodies" value="1 sequenced antibody"/>
</dbReference>
<dbReference type="Antibodypedia" id="20655">
    <property type="antibodies" value="395 antibodies from 34 providers"/>
</dbReference>
<dbReference type="DNASU" id="10765"/>
<dbReference type="Ensembl" id="ENST00000367264.7">
    <molecule id="Q9UGL1-2"/>
    <property type="protein sequence ID" value="ENSP00000356233.2"/>
    <property type="gene ID" value="ENSG00000117139.18"/>
</dbReference>
<dbReference type="Ensembl" id="ENST00000367265.9">
    <molecule id="Q9UGL1-1"/>
    <property type="protein sequence ID" value="ENSP00000356234.3"/>
    <property type="gene ID" value="ENSG00000117139.18"/>
</dbReference>
<dbReference type="GeneID" id="10765"/>
<dbReference type="KEGG" id="hsa:10765"/>
<dbReference type="MANE-Select" id="ENST00000367265.9">
    <property type="protein sequence ID" value="ENSP00000356234.3"/>
    <property type="RefSeq nucleotide sequence ID" value="NM_006618.5"/>
    <property type="RefSeq protein sequence ID" value="NP_006609.3"/>
</dbReference>
<dbReference type="UCSC" id="uc001gyf.4">
    <molecule id="Q9UGL1-1"/>
    <property type="organism name" value="human"/>
</dbReference>
<dbReference type="AGR" id="HGNC:18039"/>
<dbReference type="CTD" id="10765"/>
<dbReference type="DisGeNET" id="10765"/>
<dbReference type="GeneCards" id="KDM5B"/>
<dbReference type="HGNC" id="HGNC:18039">
    <property type="gene designation" value="KDM5B"/>
</dbReference>
<dbReference type="HPA" id="ENSG00000117139">
    <property type="expression patterns" value="Tissue enhanced (testis)"/>
</dbReference>
<dbReference type="MalaCards" id="KDM5B"/>
<dbReference type="MIM" id="605393">
    <property type="type" value="gene"/>
</dbReference>
<dbReference type="MIM" id="618109">
    <property type="type" value="phenotype"/>
</dbReference>
<dbReference type="neXtProt" id="NX_Q9UGL1"/>
<dbReference type="OpenTargets" id="ENSG00000117139"/>
<dbReference type="Orphanet" id="178469">
    <property type="disease" value="Autosomal dominant non-syndromic intellectual disability"/>
</dbReference>
<dbReference type="Orphanet" id="88616">
    <property type="disease" value="Autosomal recessive non-syndromic intellectual disability"/>
</dbReference>
<dbReference type="PharmGKB" id="PA164721626"/>
<dbReference type="VEuPathDB" id="HostDB:ENSG00000117139"/>
<dbReference type="eggNOG" id="KOG1246">
    <property type="taxonomic scope" value="Eukaryota"/>
</dbReference>
<dbReference type="GeneTree" id="ENSGT00940000157076"/>
<dbReference type="HOGENOM" id="CLU_000991_2_2_1"/>
<dbReference type="InParanoid" id="Q9UGL1"/>
<dbReference type="OMA" id="PRCDIGM"/>
<dbReference type="OrthoDB" id="1678912at2759"/>
<dbReference type="PAN-GO" id="Q9UGL1">
    <property type="GO annotations" value="3 GO annotations based on evolutionary models"/>
</dbReference>
<dbReference type="PhylomeDB" id="Q9UGL1"/>
<dbReference type="TreeFam" id="TF106476"/>
<dbReference type="BioCyc" id="MetaCyc:ENSG00000117139-MONOMER"/>
<dbReference type="BRENDA" id="1.14.11.67">
    <property type="organism ID" value="2681"/>
</dbReference>
<dbReference type="PathwayCommons" id="Q9UGL1"/>
<dbReference type="Reactome" id="R-HSA-3214842">
    <property type="pathway name" value="HDMs demethylate histones"/>
</dbReference>
<dbReference type="Reactome" id="R-HSA-8866911">
    <property type="pathway name" value="TFAP2 (AP-2) family regulates transcription of cell cycle factors"/>
</dbReference>
<dbReference type="Reactome" id="R-HSA-9821002">
    <property type="pathway name" value="Chromatin modifications during the maternal to zygotic transition (MZT)"/>
</dbReference>
<dbReference type="SignaLink" id="Q9UGL1"/>
<dbReference type="SIGNOR" id="Q9UGL1"/>
<dbReference type="BioGRID-ORCS" id="10765">
    <property type="hits" value="32 hits in 1200 CRISPR screens"/>
</dbReference>
<dbReference type="ChiTaRS" id="KDM5B">
    <property type="organism name" value="human"/>
</dbReference>
<dbReference type="EvolutionaryTrace" id="Q9UGL1"/>
<dbReference type="GeneWiki" id="JARID1B"/>
<dbReference type="GenomeRNAi" id="10765"/>
<dbReference type="Pharos" id="Q9UGL1">
    <property type="development level" value="Tchem"/>
</dbReference>
<dbReference type="PRO" id="PR:Q9UGL1"/>
<dbReference type="Proteomes" id="UP000005640">
    <property type="component" value="Chromosome 1"/>
</dbReference>
<dbReference type="RNAct" id="Q9UGL1">
    <property type="molecule type" value="protein"/>
</dbReference>
<dbReference type="Bgee" id="ENSG00000117139">
    <property type="expression patterns" value="Expressed in sperm and 186 other cell types or tissues"/>
</dbReference>
<dbReference type="ExpressionAtlas" id="Q9UGL1">
    <property type="expression patterns" value="baseline and differential"/>
</dbReference>
<dbReference type="GO" id="GO:0000785">
    <property type="term" value="C:chromatin"/>
    <property type="evidence" value="ECO:0000318"/>
    <property type="project" value="GO_Central"/>
</dbReference>
<dbReference type="GO" id="GO:0005829">
    <property type="term" value="C:cytosol"/>
    <property type="evidence" value="ECO:0000314"/>
    <property type="project" value="HPA"/>
</dbReference>
<dbReference type="GO" id="GO:0005654">
    <property type="term" value="C:nucleoplasm"/>
    <property type="evidence" value="ECO:0000314"/>
    <property type="project" value="HPA"/>
</dbReference>
<dbReference type="GO" id="GO:0005634">
    <property type="term" value="C:nucleus"/>
    <property type="evidence" value="ECO:0000314"/>
    <property type="project" value="CAFA"/>
</dbReference>
<dbReference type="GO" id="GO:0003677">
    <property type="term" value="F:DNA binding"/>
    <property type="evidence" value="ECO:0000314"/>
    <property type="project" value="GDB"/>
</dbReference>
<dbReference type="GO" id="GO:0042393">
    <property type="term" value="F:histone binding"/>
    <property type="evidence" value="ECO:0000314"/>
    <property type="project" value="UniProtKB"/>
</dbReference>
<dbReference type="GO" id="GO:0032452">
    <property type="term" value="F:histone demethylase activity"/>
    <property type="evidence" value="ECO:0000304"/>
    <property type="project" value="Reactome"/>
</dbReference>
<dbReference type="GO" id="GO:0032453">
    <property type="term" value="F:histone H3K4 demethylase activity"/>
    <property type="evidence" value="ECO:0000314"/>
    <property type="project" value="CACAO"/>
</dbReference>
<dbReference type="GO" id="GO:0034647">
    <property type="term" value="F:histone H3K4me/H3K4me2/H3K4me3 demethylase activity"/>
    <property type="evidence" value="ECO:0000314"/>
    <property type="project" value="UniProtKB"/>
</dbReference>
<dbReference type="GO" id="GO:0003676">
    <property type="term" value="F:nucleic acid binding"/>
    <property type="evidence" value="ECO:0000315"/>
    <property type="project" value="DisProt"/>
</dbReference>
<dbReference type="GO" id="GO:1990837">
    <property type="term" value="F:sequence-specific double-stranded DNA binding"/>
    <property type="evidence" value="ECO:0000315"/>
    <property type="project" value="CAFA"/>
</dbReference>
<dbReference type="GO" id="GO:0003714">
    <property type="term" value="F:transcription corepressor activity"/>
    <property type="evidence" value="ECO:0000314"/>
    <property type="project" value="UniProtKB"/>
</dbReference>
<dbReference type="GO" id="GO:0008270">
    <property type="term" value="F:zinc ion binding"/>
    <property type="evidence" value="ECO:0000314"/>
    <property type="project" value="UniProtKB"/>
</dbReference>
<dbReference type="GO" id="GO:0060444">
    <property type="term" value="P:branching involved in mammary gland duct morphogenesis"/>
    <property type="evidence" value="ECO:0007669"/>
    <property type="project" value="Ensembl"/>
</dbReference>
<dbReference type="GO" id="GO:0044344">
    <property type="term" value="P:cellular response to fibroblast growth factor stimulus"/>
    <property type="evidence" value="ECO:0007669"/>
    <property type="project" value="Ensembl"/>
</dbReference>
<dbReference type="GO" id="GO:1990830">
    <property type="term" value="P:cellular response to leukemia inhibitory factor"/>
    <property type="evidence" value="ECO:0007669"/>
    <property type="project" value="Ensembl"/>
</dbReference>
<dbReference type="GO" id="GO:0006338">
    <property type="term" value="P:chromatin remodeling"/>
    <property type="evidence" value="ECO:0000318"/>
    <property type="project" value="GO_Central"/>
</dbReference>
<dbReference type="GO" id="GO:0070306">
    <property type="term" value="P:lens fiber cell differentiation"/>
    <property type="evidence" value="ECO:0007669"/>
    <property type="project" value="Ensembl"/>
</dbReference>
<dbReference type="GO" id="GO:0060763">
    <property type="term" value="P:mammary duct terminal end bud growth"/>
    <property type="evidence" value="ECO:0007669"/>
    <property type="project" value="Ensembl"/>
</dbReference>
<dbReference type="GO" id="GO:0045892">
    <property type="term" value="P:negative regulation of DNA-templated transcription"/>
    <property type="evidence" value="ECO:0000314"/>
    <property type="project" value="GDB"/>
</dbReference>
<dbReference type="GO" id="GO:0010628">
    <property type="term" value="P:positive regulation of gene expression"/>
    <property type="evidence" value="ECO:0007669"/>
    <property type="project" value="Ensembl"/>
</dbReference>
<dbReference type="GO" id="GO:0033601">
    <property type="term" value="P:positive regulation of mammary gland epithelial cell proliferation"/>
    <property type="evidence" value="ECO:0007669"/>
    <property type="project" value="Ensembl"/>
</dbReference>
<dbReference type="GO" id="GO:0009791">
    <property type="term" value="P:post-embryonic development"/>
    <property type="evidence" value="ECO:0007669"/>
    <property type="project" value="Ensembl"/>
</dbReference>
<dbReference type="GO" id="GO:0006355">
    <property type="term" value="P:regulation of DNA-templated transcription"/>
    <property type="evidence" value="ECO:0000318"/>
    <property type="project" value="GO_Central"/>
</dbReference>
<dbReference type="GO" id="GO:2000864">
    <property type="term" value="P:regulation of estradiol secretion"/>
    <property type="evidence" value="ECO:0007669"/>
    <property type="project" value="Ensembl"/>
</dbReference>
<dbReference type="GO" id="GO:0060992">
    <property type="term" value="P:response to fungicide"/>
    <property type="evidence" value="ECO:0007669"/>
    <property type="project" value="Ensembl"/>
</dbReference>
<dbReference type="GO" id="GO:0048511">
    <property type="term" value="P:rhythmic process"/>
    <property type="evidence" value="ECO:0007669"/>
    <property type="project" value="UniProtKB-KW"/>
</dbReference>
<dbReference type="GO" id="GO:0007338">
    <property type="term" value="P:single fertilization"/>
    <property type="evidence" value="ECO:0007669"/>
    <property type="project" value="Ensembl"/>
</dbReference>
<dbReference type="GO" id="GO:0061038">
    <property type="term" value="P:uterus morphogenesis"/>
    <property type="evidence" value="ECO:0007669"/>
    <property type="project" value="Ensembl"/>
</dbReference>
<dbReference type="CDD" id="cd16874">
    <property type="entry name" value="ARID_KDM5B"/>
    <property type="match status" value="1"/>
</dbReference>
<dbReference type="CDD" id="cd15603">
    <property type="entry name" value="PHD1_KDM5B"/>
    <property type="match status" value="1"/>
</dbReference>
<dbReference type="CDD" id="cd15607">
    <property type="entry name" value="PHD2_KDM5B"/>
    <property type="match status" value="1"/>
</dbReference>
<dbReference type="CDD" id="cd15687">
    <property type="entry name" value="PHD3_KDM5B"/>
    <property type="match status" value="1"/>
</dbReference>
<dbReference type="DisProt" id="DP00712"/>
<dbReference type="FunFam" id="3.30.40.10:FF:000023">
    <property type="entry name" value="Lysine (K)-specific demethylase 5A"/>
    <property type="match status" value="1"/>
</dbReference>
<dbReference type="FunFam" id="3.30.40.10:FF:000200">
    <property type="entry name" value="Lysine-specific demethylase 5B"/>
    <property type="match status" value="1"/>
</dbReference>
<dbReference type="FunFam" id="2.60.120.650:FF:000035">
    <property type="entry name" value="PHD transcription factor Rum1"/>
    <property type="match status" value="1"/>
</dbReference>
<dbReference type="FunFam" id="1.10.150.60:FF:000001">
    <property type="entry name" value="Putative lysine-specific demethylase 5b"/>
    <property type="match status" value="1"/>
</dbReference>
<dbReference type="FunFam" id="2.60.120.650:FF:000001">
    <property type="entry name" value="Putative lysine-specific demethylase 5b"/>
    <property type="match status" value="1"/>
</dbReference>
<dbReference type="Gene3D" id="1.10.150.60">
    <property type="entry name" value="ARID DNA-binding domain"/>
    <property type="match status" value="1"/>
</dbReference>
<dbReference type="Gene3D" id="2.60.120.650">
    <property type="entry name" value="Cupin"/>
    <property type="match status" value="1"/>
</dbReference>
<dbReference type="Gene3D" id="3.30.40.10">
    <property type="entry name" value="Zinc/RING finger domain, C3HC4 (zinc finger)"/>
    <property type="match status" value="2"/>
</dbReference>
<dbReference type="InterPro" id="IPR001606">
    <property type="entry name" value="ARID_dom"/>
</dbReference>
<dbReference type="InterPro" id="IPR036431">
    <property type="entry name" value="ARID_dom_sf"/>
</dbReference>
<dbReference type="InterPro" id="IPR003347">
    <property type="entry name" value="JmjC_dom"/>
</dbReference>
<dbReference type="InterPro" id="IPR003349">
    <property type="entry name" value="JmjN"/>
</dbReference>
<dbReference type="InterPro" id="IPR048615">
    <property type="entry name" value="KDM5_C-hel"/>
</dbReference>
<dbReference type="InterPro" id="IPR047981">
    <property type="entry name" value="KDM5B_ARID"/>
</dbReference>
<dbReference type="InterPro" id="IPR047978">
    <property type="entry name" value="KDM5B_PHD1"/>
</dbReference>
<dbReference type="InterPro" id="IPR047979">
    <property type="entry name" value="KDM5B_PHD3"/>
</dbReference>
<dbReference type="InterPro" id="IPR013637">
    <property type="entry name" value="Lys_sp_deMease-like_dom"/>
</dbReference>
<dbReference type="InterPro" id="IPR019786">
    <property type="entry name" value="Zinc_finger_PHD-type_CS"/>
</dbReference>
<dbReference type="InterPro" id="IPR004198">
    <property type="entry name" value="Znf_C5HC2"/>
</dbReference>
<dbReference type="InterPro" id="IPR011011">
    <property type="entry name" value="Znf_FYVE_PHD"/>
</dbReference>
<dbReference type="InterPro" id="IPR001965">
    <property type="entry name" value="Znf_PHD"/>
</dbReference>
<dbReference type="InterPro" id="IPR019787">
    <property type="entry name" value="Znf_PHD-finger"/>
</dbReference>
<dbReference type="InterPro" id="IPR013083">
    <property type="entry name" value="Znf_RING/FYVE/PHD"/>
</dbReference>
<dbReference type="PANTHER" id="PTHR10694">
    <property type="entry name" value="LYSINE-SPECIFIC DEMETHYLASE"/>
    <property type="match status" value="1"/>
</dbReference>
<dbReference type="PANTHER" id="PTHR10694:SF3">
    <property type="entry name" value="LYSINE-SPECIFIC DEMETHYLASE 5B"/>
    <property type="match status" value="1"/>
</dbReference>
<dbReference type="Pfam" id="PF01388">
    <property type="entry name" value="ARID"/>
    <property type="match status" value="1"/>
</dbReference>
<dbReference type="Pfam" id="PF02373">
    <property type="entry name" value="JmjC"/>
    <property type="match status" value="1"/>
</dbReference>
<dbReference type="Pfam" id="PF02375">
    <property type="entry name" value="JmjN"/>
    <property type="match status" value="1"/>
</dbReference>
<dbReference type="Pfam" id="PF21323">
    <property type="entry name" value="KDM5_C-hel"/>
    <property type="match status" value="1"/>
</dbReference>
<dbReference type="Pfam" id="PF00628">
    <property type="entry name" value="PHD"/>
    <property type="match status" value="3"/>
</dbReference>
<dbReference type="Pfam" id="PF08429">
    <property type="entry name" value="PLU-1"/>
    <property type="match status" value="1"/>
</dbReference>
<dbReference type="Pfam" id="PF02928">
    <property type="entry name" value="zf-C5HC2"/>
    <property type="match status" value="1"/>
</dbReference>
<dbReference type="SMART" id="SM01014">
    <property type="entry name" value="ARID"/>
    <property type="match status" value="1"/>
</dbReference>
<dbReference type="SMART" id="SM00501">
    <property type="entry name" value="BRIGHT"/>
    <property type="match status" value="1"/>
</dbReference>
<dbReference type="SMART" id="SM00558">
    <property type="entry name" value="JmjC"/>
    <property type="match status" value="1"/>
</dbReference>
<dbReference type="SMART" id="SM00545">
    <property type="entry name" value="JmjN"/>
    <property type="match status" value="1"/>
</dbReference>
<dbReference type="SMART" id="SM00249">
    <property type="entry name" value="PHD"/>
    <property type="match status" value="3"/>
</dbReference>
<dbReference type="SUPFAM" id="SSF46774">
    <property type="entry name" value="ARID-like"/>
    <property type="match status" value="1"/>
</dbReference>
<dbReference type="SUPFAM" id="SSF51197">
    <property type="entry name" value="Clavaminate synthase-like"/>
    <property type="match status" value="1"/>
</dbReference>
<dbReference type="SUPFAM" id="SSF57903">
    <property type="entry name" value="FYVE/PHD zinc finger"/>
    <property type="match status" value="3"/>
</dbReference>
<dbReference type="PROSITE" id="PS51011">
    <property type="entry name" value="ARID"/>
    <property type="match status" value="1"/>
</dbReference>
<dbReference type="PROSITE" id="PS51184">
    <property type="entry name" value="JMJC"/>
    <property type="match status" value="1"/>
</dbReference>
<dbReference type="PROSITE" id="PS51183">
    <property type="entry name" value="JMJN"/>
    <property type="match status" value="1"/>
</dbReference>
<dbReference type="PROSITE" id="PS01359">
    <property type="entry name" value="ZF_PHD_1"/>
    <property type="match status" value="2"/>
</dbReference>
<dbReference type="PROSITE" id="PS50016">
    <property type="entry name" value="ZF_PHD_2"/>
    <property type="match status" value="3"/>
</dbReference>
<comment type="function">
    <text evidence="3 13 15 17 18 20 21 22 23 24">Histone demethylase that demethylates 'Lys-4' of histone H3, thereby playing a central role in histone code (PubMed:24952722, PubMed:27214403, PubMed:28262558). Does not demethylate histone H3 'Lys-9' or H3 'Lys-27'. Demethylates trimethylated, dimethylated and monomethylated H3 'Lys-4'. Acts as a transcriptional corepressor for FOXG1B and PAX9. Favors the proliferation of breast cancer cells by repressing tumor suppressor genes such as BRCA1 and HOXA5 (PubMed:24952722). In contrast, may act as a tumor suppressor for melanoma. Represses the CLOCK-BMAL1 heterodimer-mediated transcriptional activation of the core clock component PER2 (By similarity).</text>
</comment>
<comment type="catalytic activity">
    <reaction evidence="3">
        <text>N(6),N(6),N(6)-trimethyl-L-lysyl(4)-[histone H3] + 3 2-oxoglutarate + 3 O2 = L-lysyl(4)-[histone H3] + 3 formaldehyde + 3 succinate + 3 CO2</text>
        <dbReference type="Rhea" id="RHEA:60208"/>
        <dbReference type="Rhea" id="RHEA-COMP:15537"/>
        <dbReference type="Rhea" id="RHEA-COMP:15547"/>
        <dbReference type="ChEBI" id="CHEBI:15379"/>
        <dbReference type="ChEBI" id="CHEBI:16526"/>
        <dbReference type="ChEBI" id="CHEBI:16810"/>
        <dbReference type="ChEBI" id="CHEBI:16842"/>
        <dbReference type="ChEBI" id="CHEBI:29969"/>
        <dbReference type="ChEBI" id="CHEBI:30031"/>
        <dbReference type="ChEBI" id="CHEBI:61961"/>
        <dbReference type="EC" id="1.14.11.67"/>
    </reaction>
</comment>
<comment type="cofactor">
    <cofactor evidence="1">
        <name>Fe(2+)</name>
        <dbReference type="ChEBI" id="CHEBI:29033"/>
    </cofactor>
    <text evidence="1">Binds 1 Fe(2+) ion per subunit.</text>
</comment>
<comment type="activity regulation">
    <text evidence="22 23 24">Several specific inhibitors are being developed and tested (PubMed:26741168, PubMed:27214403). The inhibitor KDOAM-25 inhibits its demethylase activity, resulting to cell cycle arrest in myeloma cells (PubMed:28262558).</text>
</comment>
<comment type="biophysicochemical properties">
    <kinetics>
        <KM evidence="21">9 uM for 2-oxoglutarate</KM>
        <KM evidence="21">4 uM for histone H3K4me3</KM>
        <text evidence="21">kcat is 1.9 min(-1) and 2.0 min(-1) for 2-oxoglutarate and histone H3K4me3, respectively.</text>
    </kinetics>
</comment>
<comment type="subunit">
    <text evidence="13 14 15 16 19 20">Interacts with FOXG1B, PAX9, MYC, MYCN and RB1. Interacts with HDAC1, HDAC4, HDAC5 and HDAC7. Interacts (via PHD-type 1 zinc finger) with histone H3 unmodified at 'Lys-4'; the interaction is inhibited when histone H3 is methylated at 'Arg-2' or 'Lys-4' (PubMed:24952722).</text>
</comment>
<comment type="interaction">
    <interactant intactId="EBI-2514978">
        <id>Q9UGL1</id>
    </interactant>
    <interactant intactId="EBI-932887">
        <id>P49711</id>
        <label>CTCF</label>
    </interactant>
    <organismsDiffer>false</organismsDiffer>
    <experiments>8</experiments>
</comment>
<comment type="subcellular location">
    <subcellularLocation>
        <location evidence="5 6 9 12">Nucleus</location>
    </subcellularLocation>
</comment>
<comment type="alternative products">
    <event type="alternative splicing"/>
    <isoform>
        <id>Q9UGL1-1</id>
        <name>1</name>
        <sequence type="displayed"/>
    </isoform>
    <isoform>
        <id>Q9UGL1-2</id>
        <name>2</name>
        <sequence type="described" ref="VSP_026408"/>
    </isoform>
</comment>
<comment type="tissue specificity">
    <text evidence="9 10 11 12 14">Ubiquitously expressed, with highest levels in testis. Down-regulated in melanoma and glioblastoma. Up-regulated in breast cancer (at protein level).</text>
</comment>
<comment type="domain">
    <text evidence="23">Both the JmjC domain and the JmjN domain are required for enzymatic activity. However ARID and PHD-type 1 domain are not required for activity per se but contributed to recognition of the H3(1-21)K4me2 substrate peptide.</text>
</comment>
<comment type="domain">
    <text>The 2 first PHD-type zinc finger domains are required for transcription repression activity.</text>
</comment>
<comment type="disease" evidence="25 26">
    <disease id="DI-05327">
        <name>Intellectual developmental disorder, autosomal recessive 65</name>
        <acronym>MRT65</acronym>
        <description>A disorder characterized by significantly below average general intellectual functioning associated with impairments in adaptive behavior and manifested during the developmental period. MRT65 patients have moderate to severe intellectual disability, developmental delay, and facial dysmorphism. Camptodactyly is present in some patients.</description>
        <dbReference type="MIM" id="618109"/>
    </disease>
    <text>The disease may be caused by variants affecting the gene represented in this entry.</text>
</comment>
<comment type="similarity">
    <text evidence="28">Belongs to the JARID1 histone demethylase family.</text>
</comment>
<comment type="sequence caution" evidence="28">
    <conflict type="erroneous initiation">
        <sequence resource="EMBL-CDS" id="CAB63108"/>
    </conflict>
    <text>Extended N-terminus.</text>
</comment>
<evidence type="ECO:0000250" key="1"/>
<evidence type="ECO:0000250" key="2">
    <source>
        <dbReference type="UniProtKB" id="P29375"/>
    </source>
</evidence>
<evidence type="ECO:0000250" key="3">
    <source>
        <dbReference type="UniProtKB" id="Q80Y84"/>
    </source>
</evidence>
<evidence type="ECO:0000255" key="4">
    <source>
        <dbReference type="PROSITE-ProRule" id="PRU00146"/>
    </source>
</evidence>
<evidence type="ECO:0000255" key="5">
    <source>
        <dbReference type="PROSITE-ProRule" id="PRU00355"/>
    </source>
</evidence>
<evidence type="ECO:0000255" key="6">
    <source>
        <dbReference type="PROSITE-ProRule" id="PRU00537"/>
    </source>
</evidence>
<evidence type="ECO:0000255" key="7">
    <source>
        <dbReference type="PROSITE-ProRule" id="PRU00538"/>
    </source>
</evidence>
<evidence type="ECO:0000256" key="8">
    <source>
        <dbReference type="SAM" id="MobiDB-lite"/>
    </source>
</evidence>
<evidence type="ECO:0000269" key="9">
    <source>
    </source>
</evidence>
<evidence type="ECO:0000269" key="10">
    <source>
    </source>
</evidence>
<evidence type="ECO:0000269" key="11">
    <source>
    </source>
</evidence>
<evidence type="ECO:0000269" key="12">
    <source>
    </source>
</evidence>
<evidence type="ECO:0000269" key="13">
    <source>
    </source>
</evidence>
<evidence type="ECO:0000269" key="14">
    <source>
    </source>
</evidence>
<evidence type="ECO:0000269" key="15">
    <source>
    </source>
</evidence>
<evidence type="ECO:0000269" key="16">
    <source>
    </source>
</evidence>
<evidence type="ECO:0000269" key="17">
    <source>
    </source>
</evidence>
<evidence type="ECO:0000269" key="18">
    <source>
    </source>
</evidence>
<evidence type="ECO:0000269" key="19">
    <source>
    </source>
</evidence>
<evidence type="ECO:0000269" key="20">
    <source>
    </source>
</evidence>
<evidence type="ECO:0000269" key="21">
    <source>
    </source>
</evidence>
<evidence type="ECO:0000269" key="22">
    <source>
    </source>
</evidence>
<evidence type="ECO:0000269" key="23">
    <source>
    </source>
</evidence>
<evidence type="ECO:0000269" key="24">
    <source>
    </source>
</evidence>
<evidence type="ECO:0000269" key="25">
    <source>
    </source>
</evidence>
<evidence type="ECO:0000269" key="26">
    <source>
    </source>
</evidence>
<evidence type="ECO:0000303" key="27">
    <source>
    </source>
</evidence>
<evidence type="ECO:0000305" key="28"/>
<evidence type="ECO:0000305" key="29">
    <source>
    </source>
</evidence>
<evidence type="ECO:0000305" key="30">
    <source>
    </source>
</evidence>
<evidence type="ECO:0000305" key="31">
    <source>
    </source>
</evidence>
<evidence type="ECO:0007744" key="32">
    <source>
        <dbReference type="PDB" id="2MA5"/>
    </source>
</evidence>
<evidence type="ECO:0007744" key="33">
    <source>
        <dbReference type="PDB" id="2MNY"/>
    </source>
</evidence>
<evidence type="ECO:0007744" key="34">
    <source>
    </source>
</evidence>
<evidence type="ECO:0007744" key="35">
    <source>
    </source>
</evidence>
<evidence type="ECO:0007744" key="36">
    <source>
    </source>
</evidence>
<evidence type="ECO:0007744" key="37">
    <source>
    </source>
</evidence>
<evidence type="ECO:0007829" key="38">
    <source>
        <dbReference type="PDB" id="2MA5"/>
    </source>
</evidence>
<evidence type="ECO:0007829" key="39">
    <source>
        <dbReference type="PDB" id="2MNY"/>
    </source>
</evidence>
<evidence type="ECO:0007829" key="40">
    <source>
        <dbReference type="PDB" id="2MNZ"/>
    </source>
</evidence>
<evidence type="ECO:0007829" key="41">
    <source>
        <dbReference type="PDB" id="5A3N"/>
    </source>
</evidence>
<evidence type="ECO:0007829" key="42">
    <source>
        <dbReference type="PDB" id="5A3P"/>
    </source>
</evidence>
<evidence type="ECO:0007829" key="43">
    <source>
        <dbReference type="PDB" id="5FYT"/>
    </source>
</evidence>
<evidence type="ECO:0007829" key="44">
    <source>
        <dbReference type="PDB" id="5FYZ"/>
    </source>
</evidence>
<evidence type="ECO:0007829" key="45">
    <source>
        <dbReference type="PDB" id="5FZ7"/>
    </source>
</evidence>
<evidence type="ECO:0007829" key="46">
    <source>
        <dbReference type="PDB" id="5FZG"/>
    </source>
</evidence>
<evidence type="ECO:0007829" key="47">
    <source>
        <dbReference type="PDB" id="6EIU"/>
    </source>
</evidence>
<evidence type="ECO:0007829" key="48">
    <source>
        <dbReference type="PDB" id="6EK6"/>
    </source>
</evidence>
<name>KDM5B_HUMAN</name>
<proteinExistence type="evidence at protein level"/>
<accession>Q9UGL1</accession>
<accession>O95811</accession>
<accession>Q15752</accession>
<accession>Q9Y3Q5</accession>
<reference key="1">
    <citation type="journal article" date="1999" name="J. Biol. Chem.">
        <title>A novel gene (PLU-1) containing highly conserved putative DNA/chromatin binding motifs is specifically up-regulated in breast cancer.</title>
        <authorList>
            <person name="Lu P.J."/>
            <person name="Sundquist K."/>
            <person name="Baeckstrom D."/>
            <person name="Poulsom R."/>
            <person name="Hanby A."/>
            <person name="Meier-Ewert S."/>
            <person name="Jones T."/>
            <person name="Mitchell M."/>
            <person name="Pitha-Rowe P."/>
            <person name="Freemont P."/>
            <person name="Taylor-Papadimitriou J."/>
        </authorList>
    </citation>
    <scope>NUCLEOTIDE SEQUENCE [MRNA] (ISOFORM 1)</scope>
    <scope>TISSUE SPECIFICITY</scope>
    <scope>SUBCELLULAR LOCATION</scope>
    <source>
        <tissue>Mammary cancer</tissue>
    </source>
</reference>
<reference key="2">
    <citation type="journal article" date="1999" name="Lab. Invest.">
        <title>Deficiency of a novel retinoblastoma binding protein 2-homolog is a consistent feature of sporadic human melanoma skin cancer.</title>
        <authorList>
            <person name="Vogt T."/>
            <person name="Kroiss M."/>
            <person name="McClelland M."/>
            <person name="Gruss C."/>
            <person name="Becker B."/>
            <person name="Bosserhoff A.K."/>
            <person name="Rumpler G."/>
            <person name="Bogenrieder T."/>
            <person name="Landthaler M."/>
            <person name="Stolz W."/>
        </authorList>
    </citation>
    <scope>NUCLEOTIDE SEQUENCE [MRNA] (ISOFORM 2)</scope>
    <scope>TISSUE SPECIFICITY</scope>
    <source>
        <tissue>Teratocarcinoma</tissue>
    </source>
</reference>
<reference key="3">
    <citation type="journal article" date="2000" name="Eur. J. Hum. Genet.">
        <title>Isolation and chromosomal localization of a new human retinoblastoma binding protein 2 homologue 1a (RBBP2H1A).</title>
        <authorList>
            <person name="Kashuba V."/>
            <person name="Protopopov A."/>
            <person name="Podowski R."/>
            <person name="Gizatullin R."/>
            <person name="Li J."/>
            <person name="Klein G."/>
            <person name="Wahlestedt C."/>
            <person name="Zabarovsky E."/>
        </authorList>
    </citation>
    <scope>NUCLEOTIDE SEQUENCE [MRNA] (ISOFORM 1)</scope>
    <scope>TISSUE SPECIFICITY</scope>
</reference>
<reference key="4">
    <citation type="journal article" date="2006" name="Nature">
        <title>The DNA sequence and biological annotation of human chromosome 1.</title>
        <authorList>
            <person name="Gregory S.G."/>
            <person name="Barlow K.F."/>
            <person name="McLay K.E."/>
            <person name="Kaul R."/>
            <person name="Swarbreck D."/>
            <person name="Dunham A."/>
            <person name="Scott C.E."/>
            <person name="Howe K.L."/>
            <person name="Woodfine K."/>
            <person name="Spencer C.C.A."/>
            <person name="Jones M.C."/>
            <person name="Gillson C."/>
            <person name="Searle S."/>
            <person name="Zhou Y."/>
            <person name="Kokocinski F."/>
            <person name="McDonald L."/>
            <person name="Evans R."/>
            <person name="Phillips K."/>
            <person name="Atkinson A."/>
            <person name="Cooper R."/>
            <person name="Jones C."/>
            <person name="Hall R.E."/>
            <person name="Andrews T.D."/>
            <person name="Lloyd C."/>
            <person name="Ainscough R."/>
            <person name="Almeida J.P."/>
            <person name="Ambrose K.D."/>
            <person name="Anderson F."/>
            <person name="Andrew R.W."/>
            <person name="Ashwell R.I.S."/>
            <person name="Aubin K."/>
            <person name="Babbage A.K."/>
            <person name="Bagguley C.L."/>
            <person name="Bailey J."/>
            <person name="Beasley H."/>
            <person name="Bethel G."/>
            <person name="Bird C.P."/>
            <person name="Bray-Allen S."/>
            <person name="Brown J.Y."/>
            <person name="Brown A.J."/>
            <person name="Buckley D."/>
            <person name="Burton J."/>
            <person name="Bye J."/>
            <person name="Carder C."/>
            <person name="Chapman J.C."/>
            <person name="Clark S.Y."/>
            <person name="Clarke G."/>
            <person name="Clee C."/>
            <person name="Cobley V."/>
            <person name="Collier R.E."/>
            <person name="Corby N."/>
            <person name="Coville G.J."/>
            <person name="Davies J."/>
            <person name="Deadman R."/>
            <person name="Dunn M."/>
            <person name="Earthrowl M."/>
            <person name="Ellington A.G."/>
            <person name="Errington H."/>
            <person name="Frankish A."/>
            <person name="Frankland J."/>
            <person name="French L."/>
            <person name="Garner P."/>
            <person name="Garnett J."/>
            <person name="Gay L."/>
            <person name="Ghori M.R.J."/>
            <person name="Gibson R."/>
            <person name="Gilby L.M."/>
            <person name="Gillett W."/>
            <person name="Glithero R.J."/>
            <person name="Grafham D.V."/>
            <person name="Griffiths C."/>
            <person name="Griffiths-Jones S."/>
            <person name="Grocock R."/>
            <person name="Hammond S."/>
            <person name="Harrison E.S.I."/>
            <person name="Hart E."/>
            <person name="Haugen E."/>
            <person name="Heath P.D."/>
            <person name="Holmes S."/>
            <person name="Holt K."/>
            <person name="Howden P.J."/>
            <person name="Hunt A.R."/>
            <person name="Hunt S.E."/>
            <person name="Hunter G."/>
            <person name="Isherwood J."/>
            <person name="James R."/>
            <person name="Johnson C."/>
            <person name="Johnson D."/>
            <person name="Joy A."/>
            <person name="Kay M."/>
            <person name="Kershaw J.K."/>
            <person name="Kibukawa M."/>
            <person name="Kimberley A.M."/>
            <person name="King A."/>
            <person name="Knights A.J."/>
            <person name="Lad H."/>
            <person name="Laird G."/>
            <person name="Lawlor S."/>
            <person name="Leongamornlert D.A."/>
            <person name="Lloyd D.M."/>
            <person name="Loveland J."/>
            <person name="Lovell J."/>
            <person name="Lush M.J."/>
            <person name="Lyne R."/>
            <person name="Martin S."/>
            <person name="Mashreghi-Mohammadi M."/>
            <person name="Matthews L."/>
            <person name="Matthews N.S.W."/>
            <person name="McLaren S."/>
            <person name="Milne S."/>
            <person name="Mistry S."/>
            <person name="Moore M.J.F."/>
            <person name="Nickerson T."/>
            <person name="O'Dell C.N."/>
            <person name="Oliver K."/>
            <person name="Palmeiri A."/>
            <person name="Palmer S.A."/>
            <person name="Parker A."/>
            <person name="Patel D."/>
            <person name="Pearce A.V."/>
            <person name="Peck A.I."/>
            <person name="Pelan S."/>
            <person name="Phelps K."/>
            <person name="Phillimore B.J."/>
            <person name="Plumb R."/>
            <person name="Rajan J."/>
            <person name="Raymond C."/>
            <person name="Rouse G."/>
            <person name="Saenphimmachak C."/>
            <person name="Sehra H.K."/>
            <person name="Sheridan E."/>
            <person name="Shownkeen R."/>
            <person name="Sims S."/>
            <person name="Skuce C.D."/>
            <person name="Smith M."/>
            <person name="Steward C."/>
            <person name="Subramanian S."/>
            <person name="Sycamore N."/>
            <person name="Tracey A."/>
            <person name="Tromans A."/>
            <person name="Van Helmond Z."/>
            <person name="Wall M."/>
            <person name="Wallis J.M."/>
            <person name="White S."/>
            <person name="Whitehead S.L."/>
            <person name="Wilkinson J.E."/>
            <person name="Willey D.L."/>
            <person name="Williams H."/>
            <person name="Wilming L."/>
            <person name="Wray P.W."/>
            <person name="Wu Z."/>
            <person name="Coulson A."/>
            <person name="Vaudin M."/>
            <person name="Sulston J.E."/>
            <person name="Durbin R.M."/>
            <person name="Hubbard T."/>
            <person name="Wooster R."/>
            <person name="Dunham I."/>
            <person name="Carter N.P."/>
            <person name="McVean G."/>
            <person name="Ross M.T."/>
            <person name="Harrow J."/>
            <person name="Olson M.V."/>
            <person name="Beck S."/>
            <person name="Rogers J."/>
            <person name="Bentley D.R."/>
        </authorList>
    </citation>
    <scope>NUCLEOTIDE SEQUENCE [LARGE SCALE GENOMIC DNA]</scope>
</reference>
<reference key="5">
    <citation type="journal article" date="2002" name="Int. J. Cancer">
        <title>PLU-1 nuclear protein, which is upregulated in breast cancer, shows restricted expression in normal human adult tissues: a new cancer/testis antigen?</title>
        <authorList>
            <person name="Barrett A."/>
            <person name="Madsen B."/>
            <person name="Copier J."/>
            <person name="Lu P.J."/>
            <person name="Cooper L."/>
            <person name="Scibetta A.G."/>
            <person name="Burchell J."/>
            <person name="Taylor-Papadimitriou J."/>
        </authorList>
    </citation>
    <scope>TISSUE SPECIFICITY</scope>
    <scope>SUBCELLULAR LOCATION</scope>
</reference>
<reference key="6">
    <citation type="journal article" date="2003" name="J. Biol. Chem.">
        <title>Human PLU-1 has transcriptional repression properties and interacts with the developmental transcription factors BF-1 and PAX9.</title>
        <authorList>
            <person name="Tan K."/>
            <person name="Shaw A.L."/>
            <person name="Madsen B."/>
            <person name="Jensen K."/>
            <person name="Taylor-Papadimitriou J."/>
            <person name="Freemont P.S."/>
        </authorList>
    </citation>
    <scope>FUNCTION</scope>
    <scope>INTERACTION WITH FOXG1B AND PAX9</scope>
</reference>
<reference key="7">
    <citation type="journal article" date="2005" name="Mod. Pathol.">
        <title>Retinoblastoma-binding protein 2-homolog 1: a retinoblastoma-binding protein downregulated in malignant melanomas.</title>
        <authorList>
            <person name="Roesch A."/>
            <person name="Becker B."/>
            <person name="Meyer S."/>
            <person name="Wild P."/>
            <person name="Hafner C."/>
            <person name="Landthaler M."/>
            <person name="Vogt T."/>
        </authorList>
    </citation>
    <scope>TISSUE SPECIFICITY</scope>
    <scope>INTERACTION WITH RB1</scope>
</reference>
<reference key="8">
    <citation type="journal article" date="2006" name="J. Invest. Dermatol.">
        <title>Re-expression of the retinoblastoma-binding protein 2-homolog 1 reveals tumor-suppressive functions in highly metastatic melanoma cells.</title>
        <authorList>
            <person name="Roesch A."/>
            <person name="Becker B."/>
            <person name="Schneider-Brachert W."/>
            <person name="Hagen I."/>
            <person name="Landthaler M."/>
            <person name="Vogt T."/>
        </authorList>
    </citation>
    <scope>FUNCTION</scope>
    <scope>INTERACTION WITH RB1</scope>
</reference>
<reference key="9">
    <citation type="journal article" date="2007" name="Cell">
        <title>RBP2 belongs to a family of demethylases, specific for tri-and dimethylated lysine 4 on histone 3.</title>
        <authorList>
            <person name="Christensen J."/>
            <person name="Agger K."/>
            <person name="Cloos P.A.C."/>
            <person name="Pasini D."/>
            <person name="Rose S."/>
            <person name="Sennels L."/>
            <person name="Rappsilber J."/>
            <person name="Hansen K.H."/>
            <person name="Salcini A.E."/>
            <person name="Helin K."/>
        </authorList>
    </citation>
    <scope>FUNCTION</scope>
</reference>
<reference key="10">
    <citation type="journal article" date="2007" name="Genes Dev.">
        <title>The Trithorax group protein Lid is a trimethyl histone H3K4 demethylase required for dMyc-induced cell growth.</title>
        <authorList>
            <person name="Secombe J."/>
            <person name="Li L."/>
            <person name="Carlos L."/>
            <person name="Eisenman R.N."/>
        </authorList>
    </citation>
    <scope>INTERACTION WITH MYC AND MYCN</scope>
</reference>
<reference key="11">
    <citation type="journal article" date="2007" name="Int. J. Cancer">
        <title>Breast cancer associated transcriptional repressor PLU-1/JARID1B interacts directly with histone deacetylases.</title>
        <authorList>
            <person name="Barrett A."/>
            <person name="Santangelo S."/>
            <person name="Tan K."/>
            <person name="Catchpole S."/>
            <person name="Roberts K."/>
            <person name="Spencer-Dene B."/>
            <person name="Hall D."/>
            <person name="Scibetta A."/>
            <person name="Burchell J."/>
            <person name="Verdin E."/>
            <person name="Freemont P."/>
            <person name="Taylor-Papadimitriou J."/>
        </authorList>
    </citation>
    <scope>INTERACTION WITH HDAC1; HDAC4; HDAC5 AND HDAC7</scope>
    <scope>MUTAGENESIS OF HIS-335 AND HIS-1200</scope>
</reference>
<reference key="12">
    <citation type="journal article" date="2007" name="Mol. Cell">
        <title>PLU-1 is an H3K4 demethylase involved in transcriptional repression and breast cancer cell proliferation.</title>
        <authorList>
            <person name="Yamane K."/>
            <person name="Tateishi K."/>
            <person name="Klose R.J."/>
            <person name="Fang J."/>
            <person name="Fabrizio L.A."/>
            <person name="Erdjument-Bromage H."/>
            <person name="Taylor-Papadimitriou J."/>
            <person name="Tempst P."/>
            <person name="Zhang Y."/>
        </authorList>
    </citation>
    <scope>FUNCTION</scope>
    <scope>MUTAGENESIS OF HIS-499</scope>
</reference>
<reference key="13">
    <citation type="journal article" date="2008" name="Proc. Natl. Acad. Sci. U.S.A.">
        <title>A quantitative atlas of mitotic phosphorylation.</title>
        <authorList>
            <person name="Dephoure N."/>
            <person name="Zhou C."/>
            <person name="Villen J."/>
            <person name="Beausoleil S.A."/>
            <person name="Bakalarski C.E."/>
            <person name="Elledge S.J."/>
            <person name="Gygi S.P."/>
        </authorList>
    </citation>
    <scope>IDENTIFICATION BY MASS SPECTROMETRY [LARGE SCALE ANALYSIS]</scope>
    <source>
        <tissue>Cervix carcinoma</tissue>
    </source>
</reference>
<reference key="14">
    <citation type="journal article" date="2013" name="J. Proteome Res.">
        <title>Toward a comprehensive characterization of a human cancer cell phosphoproteome.</title>
        <authorList>
            <person name="Zhou H."/>
            <person name="Di Palma S."/>
            <person name="Preisinger C."/>
            <person name="Peng M."/>
            <person name="Polat A.N."/>
            <person name="Heck A.J."/>
            <person name="Mohammed S."/>
        </authorList>
    </citation>
    <scope>PHOSPHORYLATION [LARGE SCALE ANALYSIS] AT SER-986; SER-1328 AND SER-1456</scope>
    <scope>IDENTIFICATION BY MASS SPECTROMETRY [LARGE SCALE ANALYSIS]</scope>
    <source>
        <tissue>Erythroleukemia</tissue>
    </source>
</reference>
<reference key="15">
    <citation type="journal article" date="2014" name="Nat. Struct. Mol. Biol.">
        <title>Uncovering global SUMOylation signaling networks in a site-specific manner.</title>
        <authorList>
            <person name="Hendriks I.A."/>
            <person name="D'Souza R.C."/>
            <person name="Yang B."/>
            <person name="Verlaan-de Vries M."/>
            <person name="Mann M."/>
            <person name="Vertegaal A.C."/>
        </authorList>
    </citation>
    <scope>SUMOYLATION [LARGE SCALE ANALYSIS] AT LYS-242 AND LYS-278</scope>
    <scope>IDENTIFICATION BY MASS SPECTROMETRY [LARGE SCALE ANALYSIS]</scope>
</reference>
<reference key="16">
    <citation type="journal article" date="2015" name="Mol. Cell. Proteomics">
        <title>System-wide analysis of SUMOylation dynamics in response to replication stress reveals novel small ubiquitin-like modified target proteins and acceptor lysines relevant for genome stability.</title>
        <authorList>
            <person name="Xiao Z."/>
            <person name="Chang J.G."/>
            <person name="Hendriks I.A."/>
            <person name="Sigurdsson J.O."/>
            <person name="Olsen J.V."/>
            <person name="Vertegaal A.C."/>
        </authorList>
    </citation>
    <scope>SUMOYLATION [LARGE SCALE ANALYSIS] AT LYS-242; LYS-278 AND LYS-769</scope>
    <scope>IDENTIFICATION BY MASS SPECTROMETRY [LARGE SCALE ANALYSIS]</scope>
</reference>
<reference key="17">
    <citation type="journal article" date="2016" name="J. Biol. Chem.">
        <title>Characterization of a Linked Jumonji Domain of the KDM5/JARID1 Family of Histone H3 Lysine 4 Demethylases.</title>
        <authorList>
            <person name="Horton J.R."/>
            <person name="Engstrom A."/>
            <person name="Zoeller E.L."/>
            <person name="Liu X."/>
            <person name="Shanks J.R."/>
            <person name="Zhang X."/>
            <person name="Johns M.A."/>
            <person name="Vertino P.M."/>
            <person name="Fu H."/>
            <person name="Cheng X."/>
        </authorList>
    </citation>
    <scope>FUNCTION</scope>
    <scope>BIOPHYSICOCHEMICAL PROPERTIES</scope>
</reference>
<reference key="18">
    <citation type="journal article" date="2017" name="Nat. Struct. Mol. Biol.">
        <title>Site-specific mapping of the human SUMO proteome reveals co-modification with phosphorylation.</title>
        <authorList>
            <person name="Hendriks I.A."/>
            <person name="Lyon D."/>
            <person name="Young C."/>
            <person name="Jensen L.J."/>
            <person name="Vertegaal A.C."/>
            <person name="Nielsen M.L."/>
        </authorList>
    </citation>
    <scope>SUMOYLATION [LARGE SCALE ANALYSIS] AT LYS-148; LYS-204; LYS-209; LYS-242; LYS-274; LYS-278; LYS-769 AND LYS-1450</scope>
    <scope>IDENTIFICATION BY MASS SPECTROMETRY [LARGE SCALE ANALYSIS]</scope>
</reference>
<reference key="19">
    <citation type="journal article" date="2018" name="Am. J. Hum. Genet.">
        <title>Histone lysine methylases and demethylases in the landscape of human developmental disorders.</title>
        <authorList>
            <consortium name="Clinical Assessment of the Utility of Sequencing and Evaluation as a Service (CAUSES) Study"/>
            <consortium name="Deciphering Developmental Disorders (DDD) Study"/>
            <person name="Faundes V."/>
            <person name="Newman W.G."/>
            <person name="Bernardini L."/>
            <person name="Canham N."/>
            <person name="Clayton-Smith J."/>
            <person name="Dallapiccola B."/>
            <person name="Davies S.J."/>
            <person name="Demos M.K."/>
            <person name="Goldman A."/>
            <person name="Gill H."/>
            <person name="Horton R."/>
            <person name="Kerr B."/>
            <person name="Kumar D."/>
            <person name="Lehman A."/>
            <person name="McKee S."/>
            <person name="Morton J."/>
            <person name="Parker M.J."/>
            <person name="Rankin J."/>
            <person name="Robertson L."/>
            <person name="Temple I.K."/>
            <person name="Banka S."/>
        </authorList>
    </citation>
    <scope>INVOLVEMENT IN MRT65</scope>
    <scope>VARIANTS MRT65 299-ARG--LYS-1544 DEL AND 1370-LEU--LYS-1544 DEL</scope>
</reference>
<reference key="20">
    <citation type="journal article" date="2018" name="Science">
        <title>Quantifying the contribution of recessive coding variation to developmental disorders.</title>
        <authorList>
            <consortium name="Deciphering Developmental Disorders Study"/>
            <person name="Martin H.C."/>
            <person name="Jones W.D."/>
            <person name="McIntyre R."/>
            <person name="Sanchez-Andrade G."/>
            <person name="Sanderson M."/>
            <person name="Stephenson J.D."/>
            <person name="Jones C.P."/>
            <person name="Handsaker J."/>
            <person name="Gallone G."/>
            <person name="Bruntraeger M."/>
            <person name="McRae J.F."/>
            <person name="Prigmore E."/>
            <person name="Short P."/>
            <person name="Niemi M."/>
            <person name="Kaplanis J."/>
            <person name="Radford E.J."/>
            <person name="Akawi N."/>
            <person name="Balasubramanian M."/>
            <person name="Dean J."/>
            <person name="Horton R."/>
            <person name="Hulbert A."/>
            <person name="Johnson D.S."/>
            <person name="Johnson K."/>
            <person name="Kumar D."/>
            <person name="Lynch S.A."/>
            <person name="Mehta S.G."/>
            <person name="Morton J."/>
            <person name="Parker M.J."/>
            <person name="Splitt M."/>
            <person name="Turnpenny P.D."/>
            <person name="Vasudevan P.C."/>
            <person name="Wright M."/>
            <person name="Bassett A."/>
            <person name="Gerety S.S."/>
            <person name="Wright C.F."/>
            <person name="FitzPatrick D.R."/>
            <person name="Firth H.V."/>
            <person name="Hurles M.E."/>
            <person name="Barrett J.C."/>
        </authorList>
    </citation>
    <scope>INVOLVEMENT IN MRT65</scope>
</reference>
<reference key="21">
    <citation type="journal article" date="2014" name="Protein Cell">
        <title>The PHD1 finger of KDM5B recognizes unmodified H3K4 during the demethylation of histone H3K4me2/3 by KDM5B.</title>
        <authorList>
            <person name="Zhang Y."/>
            <person name="Yang H."/>
            <person name="Guo X."/>
            <person name="Rong N."/>
            <person name="Song Y."/>
            <person name="Xu Y."/>
            <person name="Lan W."/>
            <person name="Zhang X."/>
            <person name="Liu M."/>
            <person name="Xu Y."/>
            <person name="Cao C."/>
        </authorList>
    </citation>
    <scope>STRUCTURE BY NMR OF 306-360 IN COMPLEX WITH ZINC AND HISTONE H3</scope>
    <scope>FUNCTION</scope>
    <scope>INTERACTION WITH HISTONE H3</scope>
    <scope>MUTAGENESIS OF ASP-308; LEU-309; TYR-310; VAL-311; GLU-321; ASP-322; LEU-324; LEU-325; LEU-326; ASP-328; ASP-332; SER-333; TYR-334; ASP-345 AND TRP-351</scope>
</reference>
<reference key="22">
    <citation type="journal article" date="2016" name="J. Med. Chem.">
        <title>8-Substituted Pyrido[3,4-d]pyrimidin-4(3H)-one Derivatives As Potent, Cell Permeable, KDM4 (JMJD2) and KDM5 (JARID1) Histone Lysine Demethylase Inhibitors.</title>
        <authorList>
            <person name="Bavetsias V."/>
            <person name="Lanigan R.M."/>
            <person name="Ruda G.F."/>
            <person name="Atrash B."/>
            <person name="McLaughlin M.G."/>
            <person name="Tumber A."/>
            <person name="Mok N.Y."/>
            <person name="Le Bihan Y.V."/>
            <person name="Dempster S."/>
            <person name="Boxall K.J."/>
            <person name="Jeganathan F."/>
            <person name="Hatch S.B."/>
            <person name="Savitsky P."/>
            <person name="Velupillai S."/>
            <person name="Krojer T."/>
            <person name="England K.S."/>
            <person name="Sejberg J."/>
            <person name="Thai C."/>
            <person name="Donovan A."/>
            <person name="Pal A."/>
            <person name="Scozzafava G."/>
            <person name="Bennett J.M."/>
            <person name="Kawamura A."/>
            <person name="Johansson C."/>
            <person name="Szykowska A."/>
            <person name="Gileadi C."/>
            <person name="Burgess-Brown N.A."/>
            <person name="von Delft F."/>
            <person name="Oppermann U."/>
            <person name="Walters Z."/>
            <person name="Shipley J."/>
            <person name="Raynaud F.I."/>
            <person name="Westaway S.M."/>
            <person name="Prinjha R.K."/>
            <person name="Fedorov O."/>
            <person name="Burke R."/>
            <person name="Schofield C.J."/>
            <person name="Westwood I.M."/>
            <person name="Bountra C."/>
            <person name="Muller S."/>
            <person name="van Montfort R.L."/>
            <person name="Brennan P.E."/>
            <person name="Blagg J."/>
        </authorList>
    </citation>
    <scope>X-RAY CRYSTALLOGRAPHY (2.35 ANGSTROMS) OF 26-101 AND 374-772 IN COMPLEX WITH ZINC; MANGANESE AND AN INHIBITOR</scope>
    <scope>FUNCTION</scope>
    <scope>ACTIVITY REGULATION</scope>
</reference>
<reference key="23">
    <citation type="journal article" date="2016" name="Nat. Chem. Biol.">
        <title>Structural analysis of human KDM5B guides histone demethylase inhibitor development.</title>
        <authorList>
            <person name="Johansson C."/>
            <person name="Velupillai S."/>
            <person name="Tumber A."/>
            <person name="Szykowska A."/>
            <person name="Hookway E.S."/>
            <person name="Nowak R.P."/>
            <person name="Strain-Damerell C."/>
            <person name="Gileadi C."/>
            <person name="Philpott M."/>
            <person name="Burgess-Brown N."/>
            <person name="Wu N."/>
            <person name="Kopec J."/>
            <person name="Nuzzi A."/>
            <person name="Steuber H."/>
            <person name="Egner U."/>
            <person name="Badock V."/>
            <person name="Munro S."/>
            <person name="LaThangue N.B."/>
            <person name="Westaway S."/>
            <person name="Brown J."/>
            <person name="Athanasou N."/>
            <person name="Prinjha R."/>
            <person name="Brennan P.E."/>
            <person name="Oppermann U."/>
        </authorList>
    </citation>
    <scope>X-RAY CRYSTALLOGRAPHY (1.90 ANGSTROMS) OF 26-101 AND 374-772 IN COMPLEX WITH SEVERAL INHIBITORS; ZINC AND MANGANESE</scope>
    <scope>DOMAIN</scope>
    <scope>FUNCTION</scope>
    <scope>ACTIVITY REGULATION</scope>
</reference>
<reference key="24">
    <citation type="journal article" date="2017" name="Cell Chem. Biol.">
        <title>Potent and Selective KDM5 Inhibitor Stops Cellular Demethylation of H3K4me3 at Transcription Start Sites and Proliferation of MM1S Myeloma Cells.</title>
        <authorList>
            <person name="Tumber A."/>
            <person name="Nuzzi A."/>
            <person name="Hookway E.S."/>
            <person name="Hatch S.B."/>
            <person name="Velupillai S."/>
            <person name="Johansson C."/>
            <person name="Kawamura A."/>
            <person name="Savitsky P."/>
            <person name="Yapp C."/>
            <person name="Szykowska A."/>
            <person name="Wu N."/>
            <person name="Bountra C."/>
            <person name="Strain-Damerell C."/>
            <person name="Burgess-Brown N.A."/>
            <person name="Ruda G.F."/>
            <person name="Fedorov O."/>
            <person name="Munro S."/>
            <person name="England K.S."/>
            <person name="Nowak R.P."/>
            <person name="Schofield C.J."/>
            <person name="La Thangue N.B."/>
            <person name="Pawlyn C."/>
            <person name="Davies F."/>
            <person name="Morgan G."/>
            <person name="Athanasou N."/>
            <person name="Muller S."/>
            <person name="Oppermann U."/>
            <person name="Brennan P.E."/>
        </authorList>
    </citation>
    <scope>X-RAY CRYSTALLOGRAPHY (2.00 ANGSTROMS) OF 26-100 AND 374-772 IN COMPLEX WITH INHIBITOR KDOAM-25; ZINC AND MANGANESE</scope>
    <scope>FUNCTION</scope>
    <scope>ACTIVITY REGULATION</scope>
    <scope>MUTAGENESIS OF 499-HIS--GLU-501</scope>
</reference>
<keyword id="KW-0002">3D-structure</keyword>
<keyword id="KW-0007">Acetylation</keyword>
<keyword id="KW-0025">Alternative splicing</keyword>
<keyword id="KW-0090">Biological rhythms</keyword>
<keyword id="KW-0156">Chromatin regulator</keyword>
<keyword id="KW-0223">Dioxygenase</keyword>
<keyword id="KW-0225">Disease variant</keyword>
<keyword id="KW-0991">Intellectual disability</keyword>
<keyword id="KW-0408">Iron</keyword>
<keyword id="KW-1017">Isopeptide bond</keyword>
<keyword id="KW-0479">Metal-binding</keyword>
<keyword id="KW-0539">Nucleus</keyword>
<keyword id="KW-0560">Oxidoreductase</keyword>
<keyword id="KW-0597">Phosphoprotein</keyword>
<keyword id="KW-1267">Proteomics identification</keyword>
<keyword id="KW-1185">Reference proteome</keyword>
<keyword id="KW-0677">Repeat</keyword>
<keyword id="KW-0678">Repressor</keyword>
<keyword id="KW-0804">Transcription</keyword>
<keyword id="KW-0805">Transcription regulation</keyword>
<keyword id="KW-0832">Ubl conjugation</keyword>
<keyword id="KW-0862">Zinc</keyword>
<keyword id="KW-0863">Zinc-finger</keyword>
<sequence>MEAATTLHPGPRPALPLGGPGPLGEFLPPPECPVFEPSWEEFADPFAFIHKIRPIAEQTGICKVRPPPDWQPPFACDVDKLHFTPRIQRLNELEAQTRVKLNFLDQIAKYWELQGSTLKIPHVERKILDLFQLNKLVAEEGGFAVVCKDRKWTKIATKMGFAPGKAVGSHIRGHYERILNPYNLFLSGDSLRCLQKPNLTTDTKDKEYKPHDIPQRQSVQPSETCPPARRAKRMRAEAMNIKIEPEETTEARTHNLRRRMGCPTPKCENEKEMKSSIKQEPIERKDYIVENEKEKPKSRSKKATNAVDLYVCLLCGSGNDEDRLLLCDGCDDSYHTFCLIPPLHDVPKGDWRCPKCLAQECSKPQEAFGFEQAARDYTLRTFGEMADAFKSDYFNMPVHMVPTELVEKEFWRLVSTIEEDVTVEYGADIASKEFGSGFPVRDGKIKLSPEEEEYLDSGWNLNNMPVMEQSVLAHITADICGMKLPWLYVGMCFSSFCWHIEDHWSYSINYLHWGEPKTWYGVPGYAAEQLENVMKKLAPELFVSQPDLLHQLVTIMNPNTLMTHEVPVYRTNQCAGEFVITFPRAYHSGFNQGFNFAEAVNFCTVDWLPLGRQCVEHYRLLHRYCVFSHDEMICKMASKADVLDVVVASTVQKDMAIMIEDEKALRETVRKLGVIDSERMDFELLPDDERQCVKCKTTCFMSAISCSCKPGLLVCLHHVKELCSCPPYKYKLRYRYTLDDLYPMMNALKLRAESYNEWALNVNEALEAKINKKKSLVSFKALIEESEMKKFPDNDLLRHLRLVTQDAEKCASVAQQLLNGKRQTRYRSGGGKSQNQLTVNELRQFVTQLYALPCVLSQTPLLKDLLNRVEDFQQHSQKLLSEETPSAAELQDLLDVSFEFDVELPQLAEMRIRLEQARWLEEVQQACLDPSSLTLDDMRRLIDLGVGLAPYSAVEKAMARLQELLTVSEHWDDKAKSLLKARPRHSLNSLATAVKEIEEIPAYLPNGAALKDSVQRARDWLQDVEGLQAGGRVPVLDTLIELVTRGRSIPVHLNSLPRLETLVAEVQAWKECAVNTFLTENSPYSLLEVLCPRCDIGLLGLKRKQRKLKEPLPNGKKKSTKLESLSDLERALTESKETASAMATLGEARLREMEALQSLRLANEGKLLSPLQDVDIKICLCQKAPAAPMIQCELCRDAFHTSCVAVPSISQGLRIWLCPHCRRSEKPPLEKILPLLASLQRIRVRLPEGDALRYMIERTVNWQHRAQQLLSSGNLKFVQDRVGSGLLYSRWQASAGQVSDTNKVSQPPGTTSFSLPDDWDNRTSYLHSPFSTGRSCIPLHGVSPEVNELLMEAQLLQVSLPEIQELYQTLLAKPSPAQQTDRSSPVRPSSEKNDCCRGKRDGINSLERKLKRRLEREGLSSERWERVKKMRTPKKKKIKLSHPKDMNNFKLERERSYELVRSAETHSLPSDTSYSEQEDSEDEDAICPAVSCLQPEGDEVDWVQCDGSCNQWFHQVCVGVSPEMAEKEDYICVRCTVKDAPSRK</sequence>
<gene>
    <name type="primary">KDM5B</name>
    <name type="synonym">JARID1B</name>
    <name type="synonym">PLU1</name>
    <name type="synonym">RBBP2H1</name>
</gene>